<evidence type="ECO:0000250" key="1"/>
<evidence type="ECO:0000250" key="2">
    <source>
        <dbReference type="UniProtKB" id="P03968"/>
    </source>
</evidence>
<evidence type="ECO:0000269" key="3">
    <source>
    </source>
</evidence>
<evidence type="ECO:0000269" key="4">
    <source>
    </source>
</evidence>
<evidence type="ECO:0000269" key="5">
    <source>
    </source>
</evidence>
<evidence type="ECO:0000269" key="6">
    <source>
    </source>
</evidence>
<evidence type="ECO:0000269" key="7">
    <source>
    </source>
</evidence>
<evidence type="ECO:0000269" key="8">
    <source>
    </source>
</evidence>
<evidence type="ECO:0000269" key="9">
    <source>
    </source>
</evidence>
<evidence type="ECO:0000269" key="10">
    <source>
    </source>
</evidence>
<evidence type="ECO:0000269" key="11">
    <source>
    </source>
</evidence>
<evidence type="ECO:0000269" key="12">
    <source>
    </source>
</evidence>
<evidence type="ECO:0000269" key="13">
    <source>
    </source>
</evidence>
<evidence type="ECO:0000269" key="14">
    <source>
    </source>
</evidence>
<evidence type="ECO:0000269" key="15">
    <source>
    </source>
</evidence>
<evidence type="ECO:0000269" key="16">
    <source>
    </source>
</evidence>
<evidence type="ECO:0000269" key="17">
    <source>
    </source>
</evidence>
<evidence type="ECO:0000269" key="18">
    <source>
    </source>
</evidence>
<evidence type="ECO:0000269" key="19">
    <source>
    </source>
</evidence>
<evidence type="ECO:0000269" key="20">
    <source ref="8"/>
</evidence>
<evidence type="ECO:0000303" key="21">
    <source>
    </source>
</evidence>
<evidence type="ECO:0000305" key="22"/>
<evidence type="ECO:0007829" key="23">
    <source>
        <dbReference type="PDB" id="1DZC"/>
    </source>
</evidence>
<evidence type="ECO:0007829" key="24">
    <source>
        <dbReference type="PDB" id="1RG8"/>
    </source>
</evidence>
<evidence type="ECO:0007829" key="25">
    <source>
        <dbReference type="PDB" id="2K43"/>
    </source>
</evidence>
<evidence type="ECO:0007829" key="26">
    <source>
        <dbReference type="PDB" id="3B9U"/>
    </source>
</evidence>
<evidence type="ECO:0007829" key="27">
    <source>
        <dbReference type="PDB" id="3O3Q"/>
    </source>
</evidence>
<evidence type="ECO:0007829" key="28">
    <source>
        <dbReference type="PDB" id="3OJ2"/>
    </source>
</evidence>
<evidence type="ECO:0007829" key="29">
    <source>
        <dbReference type="PDB" id="3OJM"/>
    </source>
</evidence>
<evidence type="ECO:0007829" key="30">
    <source>
        <dbReference type="PDB" id="4QC4"/>
    </source>
</evidence>
<name>FGF1_HUMAN</name>
<dbReference type="EMBL" id="M13361">
    <property type="protein sequence ID" value="AAA79245.1"/>
    <property type="molecule type" value="mRNA"/>
</dbReference>
<dbReference type="EMBL" id="M30492">
    <property type="protein sequence ID" value="AAA52446.1"/>
    <property type="molecule type" value="Genomic_DNA"/>
</dbReference>
<dbReference type="EMBL" id="M30490">
    <property type="protein sequence ID" value="AAA52446.1"/>
    <property type="status" value="JOINED"/>
    <property type="molecule type" value="Genomic_DNA"/>
</dbReference>
<dbReference type="EMBL" id="M30491">
    <property type="protein sequence ID" value="AAA52446.1"/>
    <property type="status" value="JOINED"/>
    <property type="molecule type" value="Genomic_DNA"/>
</dbReference>
<dbReference type="EMBL" id="M23087">
    <property type="protein sequence ID" value="AAA52638.1"/>
    <property type="molecule type" value="Genomic_DNA"/>
</dbReference>
<dbReference type="EMBL" id="M23086">
    <property type="protein sequence ID" value="AAA52638.1"/>
    <property type="status" value="JOINED"/>
    <property type="molecule type" value="Genomic_DNA"/>
</dbReference>
<dbReference type="EMBL" id="X51943">
    <property type="protein sequence ID" value="CAA36206.1"/>
    <property type="molecule type" value="mRNA"/>
</dbReference>
<dbReference type="EMBL" id="X65778">
    <property type="protein sequence ID" value="CAA46661.1"/>
    <property type="molecule type" value="mRNA"/>
</dbReference>
<dbReference type="EMBL" id="S67291">
    <property type="protein sequence ID" value="AAB29057.2"/>
    <property type="molecule type" value="mRNA"/>
</dbReference>
<dbReference type="EMBL" id="S67292">
    <property type="protein sequence ID" value="AAB29058.1"/>
    <property type="molecule type" value="mRNA"/>
</dbReference>
<dbReference type="EMBL" id="AY601819">
    <property type="protein sequence ID" value="AAS99352.1"/>
    <property type="molecule type" value="Genomic_DNA"/>
</dbReference>
<dbReference type="EMBL" id="AC005370">
    <property type="status" value="NOT_ANNOTATED_CDS"/>
    <property type="molecule type" value="Genomic_DNA"/>
</dbReference>
<dbReference type="EMBL" id="AK312301">
    <property type="protein sequence ID" value="BAG35227.1"/>
    <property type="molecule type" value="mRNA"/>
</dbReference>
<dbReference type="EMBL" id="CH471062">
    <property type="protein sequence ID" value="EAW61881.1"/>
    <property type="molecule type" value="Genomic_DNA"/>
</dbReference>
<dbReference type="EMBL" id="CH471062">
    <property type="protein sequence ID" value="EAW61882.1"/>
    <property type="molecule type" value="Genomic_DNA"/>
</dbReference>
<dbReference type="EMBL" id="CH471062">
    <property type="protein sequence ID" value="EAW61885.1"/>
    <property type="molecule type" value="Genomic_DNA"/>
</dbReference>
<dbReference type="EMBL" id="BC032697">
    <property type="protein sequence ID" value="AAH32697.1"/>
    <property type="molecule type" value="mRNA"/>
</dbReference>
<dbReference type="EMBL" id="M60515">
    <property type="protein sequence ID" value="AAA51672.1"/>
    <property type="molecule type" value="mRNA"/>
</dbReference>
<dbReference type="EMBL" id="M60516">
    <property type="protein sequence ID" value="AAA51673.1"/>
    <property type="molecule type" value="mRNA"/>
</dbReference>
<dbReference type="CCDS" id="CCDS4275.1">
    <molecule id="P05230-1"/>
</dbReference>
<dbReference type="CCDS" id="CCDS4276.1">
    <molecule id="P05230-2"/>
</dbReference>
<dbReference type="PIR" id="A33665">
    <property type="entry name" value="A33665"/>
</dbReference>
<dbReference type="PIR" id="JH0708">
    <property type="entry name" value="JH0708"/>
</dbReference>
<dbReference type="RefSeq" id="NP_000791.1">
    <molecule id="P05230-1"/>
    <property type="nucleotide sequence ID" value="NM_000800.5"/>
</dbReference>
<dbReference type="RefSeq" id="NP_001138364.1">
    <molecule id="P05230-1"/>
    <property type="nucleotide sequence ID" value="NM_001144892.3"/>
</dbReference>
<dbReference type="RefSeq" id="NP_001138406.1">
    <molecule id="P05230-1"/>
    <property type="nucleotide sequence ID" value="NM_001144934.2"/>
</dbReference>
<dbReference type="RefSeq" id="NP_001138407.1">
    <molecule id="P05230-1"/>
    <property type="nucleotide sequence ID" value="NM_001144935.2"/>
</dbReference>
<dbReference type="RefSeq" id="NP_001244134.1">
    <molecule id="P05230-1"/>
    <property type="nucleotide sequence ID" value="NM_001257205.1"/>
</dbReference>
<dbReference type="RefSeq" id="NP_001244136.1">
    <molecule id="P05230-1"/>
    <property type="nucleotide sequence ID" value="NM_001257207.2"/>
</dbReference>
<dbReference type="RefSeq" id="NP_001244137.1">
    <molecule id="P05230-1"/>
    <property type="nucleotide sequence ID" value="NM_001257208.2"/>
</dbReference>
<dbReference type="RefSeq" id="NP_001244138.1">
    <molecule id="P05230-1"/>
    <property type="nucleotide sequence ID" value="NM_001257209.1"/>
</dbReference>
<dbReference type="RefSeq" id="NP_001244139.1">
    <molecule id="P05230-1"/>
    <property type="nucleotide sequence ID" value="NM_001257210.2"/>
</dbReference>
<dbReference type="RefSeq" id="NP_001341880.1">
    <molecule id="P05230-1"/>
    <property type="nucleotide sequence ID" value="NM_001354951.2"/>
</dbReference>
<dbReference type="RefSeq" id="NP_001341881.1">
    <molecule id="P05230-1"/>
    <property type="nucleotide sequence ID" value="NM_001354952.2"/>
</dbReference>
<dbReference type="RefSeq" id="NP_001341882.1">
    <molecule id="P05230-1"/>
    <property type="nucleotide sequence ID" value="NM_001354953.2"/>
</dbReference>
<dbReference type="RefSeq" id="NP_001341883.1">
    <molecule id="P05230-1"/>
    <property type="nucleotide sequence ID" value="NM_001354954.2"/>
</dbReference>
<dbReference type="RefSeq" id="NP_001341884.1">
    <molecule id="P05230-1"/>
    <property type="nucleotide sequence ID" value="NM_001354955.2"/>
</dbReference>
<dbReference type="RefSeq" id="NP_001341885.1">
    <molecule id="P05230-1"/>
    <property type="nucleotide sequence ID" value="NM_001354956.2"/>
</dbReference>
<dbReference type="RefSeq" id="NP_001341888.1">
    <molecule id="P05230-2"/>
    <property type="nucleotide sequence ID" value="NM_001354959.2"/>
</dbReference>
<dbReference type="RefSeq" id="NP_001341890.1">
    <molecule id="P05230-2"/>
    <property type="nucleotide sequence ID" value="NM_001354961.2"/>
</dbReference>
<dbReference type="RefSeq" id="NP_001341891.1">
    <molecule id="P05230-2"/>
    <property type="nucleotide sequence ID" value="NM_001354962.2"/>
</dbReference>
<dbReference type="RefSeq" id="NP_001341892.1">
    <molecule id="P05230-2"/>
    <property type="nucleotide sequence ID" value="NM_001354963.2"/>
</dbReference>
<dbReference type="RefSeq" id="NP_001341893.1">
    <molecule id="P05230-2"/>
    <property type="nucleotide sequence ID" value="NM_001354964.2"/>
</dbReference>
<dbReference type="RefSeq" id="NP_149127.1">
    <molecule id="P05230-2"/>
    <property type="nucleotide sequence ID" value="NM_033136.4"/>
</dbReference>
<dbReference type="PDB" id="1AXM">
    <property type="method" value="X-ray"/>
    <property type="resolution" value="3.00 A"/>
    <property type="chains" value="A/B/C/D/E/F=21-155"/>
</dbReference>
<dbReference type="PDB" id="1DJS">
    <property type="method" value="X-ray"/>
    <property type="resolution" value="2.40 A"/>
    <property type="chains" value="B=21-155"/>
</dbReference>
<dbReference type="PDB" id="1DZC">
    <property type="method" value="NMR"/>
    <property type="chains" value="A=25-155"/>
</dbReference>
<dbReference type="PDB" id="1DZD">
    <property type="method" value="NMR"/>
    <property type="chains" value="A=29-155"/>
</dbReference>
<dbReference type="PDB" id="1E0O">
    <property type="method" value="X-ray"/>
    <property type="resolution" value="2.80 A"/>
    <property type="chains" value="A/C=16-155"/>
</dbReference>
<dbReference type="PDB" id="1EVT">
    <property type="method" value="X-ray"/>
    <property type="resolution" value="2.80 A"/>
    <property type="chains" value="A/B=22-155"/>
</dbReference>
<dbReference type="PDB" id="1HKN">
    <property type="method" value="X-ray"/>
    <property type="resolution" value="2.00 A"/>
    <property type="chains" value="A/B/C/D/E/F=17-155"/>
</dbReference>
<dbReference type="PDB" id="1JQZ">
    <property type="method" value="X-ray"/>
    <property type="resolution" value="1.65 A"/>
    <property type="chains" value="A/B=16-155"/>
</dbReference>
<dbReference type="PDB" id="1JT3">
    <property type="method" value="X-ray"/>
    <property type="resolution" value="1.95 A"/>
    <property type="chains" value="A/B=16-155"/>
</dbReference>
<dbReference type="PDB" id="1JT4">
    <property type="method" value="X-ray"/>
    <property type="resolution" value="1.78 A"/>
    <property type="chains" value="A/B=16-155"/>
</dbReference>
<dbReference type="PDB" id="1JT5">
    <property type="method" value="X-ray"/>
    <property type="resolution" value="1.85 A"/>
    <property type="chains" value="A/B=16-155"/>
</dbReference>
<dbReference type="PDB" id="1JT7">
    <property type="method" value="X-ray"/>
    <property type="resolution" value="1.70 A"/>
    <property type="chains" value="A/B/C/D=16-155"/>
</dbReference>
<dbReference type="PDB" id="1JTC">
    <property type="method" value="X-ray"/>
    <property type="resolution" value="1.70 A"/>
    <property type="chains" value="A/B/C/D=16-155"/>
</dbReference>
<dbReference type="PDB" id="1JY0">
    <property type="method" value="X-ray"/>
    <property type="resolution" value="1.70 A"/>
    <property type="chains" value="A/B=16-155"/>
</dbReference>
<dbReference type="PDB" id="1K5U">
    <property type="method" value="X-ray"/>
    <property type="resolution" value="2.00 A"/>
    <property type="chains" value="A/B/C=16-154"/>
</dbReference>
<dbReference type="PDB" id="1K5V">
    <property type="method" value="X-ray"/>
    <property type="resolution" value="2.10 A"/>
    <property type="chains" value="A/B=16-154"/>
</dbReference>
<dbReference type="PDB" id="1M16">
    <property type="method" value="X-ray"/>
    <property type="resolution" value="1.70 A"/>
    <property type="chains" value="A/B=16-155"/>
</dbReference>
<dbReference type="PDB" id="1NZK">
    <property type="method" value="X-ray"/>
    <property type="resolution" value="1.95 A"/>
    <property type="chains" value="A/B/C/D=16-152"/>
</dbReference>
<dbReference type="PDB" id="1P63">
    <property type="method" value="X-ray"/>
    <property type="resolution" value="1.60 A"/>
    <property type="chains" value="A/B=16-155"/>
</dbReference>
<dbReference type="PDB" id="1PZZ">
    <property type="method" value="X-ray"/>
    <property type="resolution" value="2.00 A"/>
    <property type="chains" value="A/B=16-155"/>
</dbReference>
<dbReference type="PDB" id="1Q03">
    <property type="method" value="X-ray"/>
    <property type="resolution" value="2.05 A"/>
    <property type="chains" value="A/B=16-152"/>
</dbReference>
<dbReference type="PDB" id="1Q04">
    <property type="method" value="X-ray"/>
    <property type="resolution" value="1.80 A"/>
    <property type="chains" value="A/B=16-155"/>
</dbReference>
<dbReference type="PDB" id="1RG8">
    <property type="method" value="X-ray"/>
    <property type="resolution" value="1.10 A"/>
    <property type="chains" value="A/B=16-155"/>
</dbReference>
<dbReference type="PDB" id="1RML">
    <property type="method" value="NMR"/>
    <property type="chains" value="A=1-155"/>
</dbReference>
<dbReference type="PDB" id="1RY7">
    <property type="method" value="X-ray"/>
    <property type="resolution" value="3.20 A"/>
    <property type="chains" value="A=1-155"/>
</dbReference>
<dbReference type="PDB" id="1YTO">
    <property type="method" value="X-ray"/>
    <property type="resolution" value="2.10 A"/>
    <property type="chains" value="A/B/C/D=16-155"/>
</dbReference>
<dbReference type="PDB" id="1Z2V">
    <property type="method" value="X-ray"/>
    <property type="resolution" value="1.90 A"/>
    <property type="chains" value="A/B=16-155"/>
</dbReference>
<dbReference type="PDB" id="1Z4S">
    <property type="method" value="X-ray"/>
    <property type="resolution" value="2.60 A"/>
    <property type="chains" value="A/B/C/D=16-155"/>
</dbReference>
<dbReference type="PDB" id="2AFG">
    <property type="method" value="X-ray"/>
    <property type="resolution" value="2.00 A"/>
    <property type="chains" value="A/B/C/D=16-155"/>
</dbReference>
<dbReference type="PDB" id="2AQZ">
    <property type="method" value="X-ray"/>
    <property type="resolution" value="1.85 A"/>
    <property type="chains" value="A/B=16-155"/>
</dbReference>
<dbReference type="PDB" id="2AXM">
    <property type="method" value="X-ray"/>
    <property type="resolution" value="3.00 A"/>
    <property type="chains" value="A/B=21-155"/>
</dbReference>
<dbReference type="PDB" id="2ERM">
    <property type="method" value="NMR"/>
    <property type="chains" value="A=17-155"/>
</dbReference>
<dbReference type="PDB" id="2HW9">
    <property type="method" value="X-ray"/>
    <property type="resolution" value="1.60 A"/>
    <property type="chains" value="A/B=16-155"/>
</dbReference>
<dbReference type="PDB" id="2HWA">
    <property type="method" value="X-ray"/>
    <property type="resolution" value="1.65 A"/>
    <property type="chains" value="A/B=16-155"/>
</dbReference>
<dbReference type="PDB" id="2HWM">
    <property type="method" value="X-ray"/>
    <property type="resolution" value="1.60 A"/>
    <property type="chains" value="A/B=16-155"/>
</dbReference>
<dbReference type="PDB" id="2HZ9">
    <property type="method" value="X-ray"/>
    <property type="resolution" value="1.70 A"/>
    <property type="chains" value="A/B=16-155"/>
</dbReference>
<dbReference type="PDB" id="2K43">
    <property type="method" value="NMR"/>
    <property type="chains" value="A=23-155"/>
</dbReference>
<dbReference type="PDB" id="2K4A">
    <property type="method" value="NMR"/>
    <property type="chains" value="B=23-155"/>
</dbReference>
<dbReference type="PDB" id="2K8R">
    <property type="method" value="NMR"/>
    <property type="chains" value="A=23-155"/>
</dbReference>
<dbReference type="PDB" id="2KI4">
    <property type="method" value="NMR"/>
    <property type="chains" value="A/D=23-155"/>
</dbReference>
<dbReference type="PDB" id="2KI6">
    <property type="method" value="NMR"/>
    <property type="chains" value="B/E=23-155"/>
</dbReference>
<dbReference type="PDB" id="2NTD">
    <property type="method" value="X-ray"/>
    <property type="resolution" value="2.52 A"/>
    <property type="chains" value="A/B/C/D=16-155"/>
</dbReference>
<dbReference type="PDB" id="2Q9X">
    <property type="method" value="X-ray"/>
    <property type="resolution" value="1.70 A"/>
    <property type="chains" value="A=16-155"/>
</dbReference>
<dbReference type="PDB" id="2RQ9">
    <property type="method" value="NMR"/>
    <property type="chains" value="A=22-155"/>
</dbReference>
<dbReference type="PDB" id="3B9U">
    <property type="method" value="X-ray"/>
    <property type="resolution" value="1.55 A"/>
    <property type="chains" value="A=16-155"/>
</dbReference>
<dbReference type="PDB" id="3BA4">
    <property type="method" value="X-ray"/>
    <property type="resolution" value="1.80 A"/>
    <property type="chains" value="A/B=16-155"/>
</dbReference>
<dbReference type="PDB" id="3BA5">
    <property type="method" value="X-ray"/>
    <property type="resolution" value="1.75 A"/>
    <property type="chains" value="A/B=16-155"/>
</dbReference>
<dbReference type="PDB" id="3BA7">
    <property type="method" value="X-ray"/>
    <property type="resolution" value="1.60 A"/>
    <property type="chains" value="A/B=16-155"/>
</dbReference>
<dbReference type="PDB" id="3BAD">
    <property type="method" value="X-ray"/>
    <property type="resolution" value="2.00 A"/>
    <property type="chains" value="A/B=16-155"/>
</dbReference>
<dbReference type="PDB" id="3BAG">
    <property type="method" value="X-ray"/>
    <property type="resolution" value="1.75 A"/>
    <property type="chains" value="A/B=16-155"/>
</dbReference>
<dbReference type="PDB" id="3BAH">
    <property type="method" value="X-ray"/>
    <property type="resolution" value="1.65 A"/>
    <property type="chains" value="A/B=16-155"/>
</dbReference>
<dbReference type="PDB" id="3BAO">
    <property type="method" value="X-ray"/>
    <property type="resolution" value="1.55 A"/>
    <property type="chains" value="A/B=16-155"/>
</dbReference>
<dbReference type="PDB" id="3BAQ">
    <property type="method" value="X-ray"/>
    <property type="resolution" value="1.80 A"/>
    <property type="chains" value="A/B=16-155"/>
</dbReference>
<dbReference type="PDB" id="3BAU">
    <property type="method" value="X-ray"/>
    <property type="resolution" value="1.60 A"/>
    <property type="chains" value="A/B=16-155"/>
</dbReference>
<dbReference type="PDB" id="3BAV">
    <property type="method" value="X-ray"/>
    <property type="resolution" value="1.62 A"/>
    <property type="chains" value="A/B=16-155"/>
</dbReference>
<dbReference type="PDB" id="3BB2">
    <property type="method" value="X-ray"/>
    <property type="resolution" value="1.50 A"/>
    <property type="chains" value="A/B=16-155"/>
</dbReference>
<dbReference type="PDB" id="3CQA">
    <property type="method" value="X-ray"/>
    <property type="resolution" value="1.80 A"/>
    <property type="chains" value="A/B=16-155"/>
</dbReference>
<dbReference type="PDB" id="3CRG">
    <property type="method" value="X-ray"/>
    <property type="resolution" value="1.85 A"/>
    <property type="chains" value="A/B=16-155"/>
</dbReference>
<dbReference type="PDB" id="3CRH">
    <property type="method" value="X-ray"/>
    <property type="resolution" value="2.15 A"/>
    <property type="chains" value="A/B=16-155"/>
</dbReference>
<dbReference type="PDB" id="3CRI">
    <property type="method" value="X-ray"/>
    <property type="resolution" value="2.10 A"/>
    <property type="chains" value="A/B=16-155"/>
</dbReference>
<dbReference type="PDB" id="3CU1">
    <property type="method" value="X-ray"/>
    <property type="resolution" value="2.60 A"/>
    <property type="chains" value="B/D=22-152"/>
</dbReference>
<dbReference type="PDB" id="3FGM">
    <property type="method" value="X-ray"/>
    <property type="resolution" value="1.95 A"/>
    <property type="chains" value="A/B=16-155"/>
</dbReference>
<dbReference type="PDB" id="3FJ8">
    <property type="method" value="X-ray"/>
    <property type="resolution" value="2.00 A"/>
    <property type="chains" value="A/B=16-155"/>
</dbReference>
<dbReference type="PDB" id="3FJ9">
    <property type="method" value="X-ray"/>
    <property type="resolution" value="1.90 A"/>
    <property type="chains" value="A/B=16-155"/>
</dbReference>
<dbReference type="PDB" id="3FJA">
    <property type="method" value="X-ray"/>
    <property type="resolution" value="1.95 A"/>
    <property type="chains" value="A/B=16-155"/>
</dbReference>
<dbReference type="PDB" id="3FJB">
    <property type="method" value="X-ray"/>
    <property type="resolution" value="2.00 A"/>
    <property type="chains" value="A/B=16-155"/>
</dbReference>
<dbReference type="PDB" id="3FJC">
    <property type="method" value="X-ray"/>
    <property type="resolution" value="2.00 A"/>
    <property type="chains" value="A/B=16-155"/>
</dbReference>
<dbReference type="PDB" id="3FJD">
    <property type="method" value="X-ray"/>
    <property type="resolution" value="1.90 A"/>
    <property type="chains" value="A/B=16-155"/>
</dbReference>
<dbReference type="PDB" id="3FJE">
    <property type="method" value="X-ray"/>
    <property type="resolution" value="2.10 A"/>
    <property type="chains" value="A/B=16-155"/>
</dbReference>
<dbReference type="PDB" id="3FJF">
    <property type="method" value="X-ray"/>
    <property type="resolution" value="1.90 A"/>
    <property type="chains" value="A/B=16-155"/>
</dbReference>
<dbReference type="PDB" id="3FJH">
    <property type="method" value="X-ray"/>
    <property type="resolution" value="1.90 A"/>
    <property type="chains" value="A/B=16-155"/>
</dbReference>
<dbReference type="PDB" id="3FJI">
    <property type="method" value="X-ray"/>
    <property type="resolution" value="2.55 A"/>
    <property type="chains" value="A/B/C/D=16-155"/>
</dbReference>
<dbReference type="PDB" id="3FJJ">
    <property type="method" value="X-ray"/>
    <property type="resolution" value="1.90 A"/>
    <property type="chains" value="A/B=16-155"/>
</dbReference>
<dbReference type="PDB" id="3FJK">
    <property type="method" value="X-ray"/>
    <property type="resolution" value="2.15 A"/>
    <property type="chains" value="A/B/C/D=16-155"/>
</dbReference>
<dbReference type="PDB" id="3HOM">
    <property type="method" value="X-ray"/>
    <property type="resolution" value="2.30 A"/>
    <property type="chains" value="A/B=16-155"/>
</dbReference>
<dbReference type="PDB" id="3JUT">
    <property type="method" value="X-ray"/>
    <property type="resolution" value="2.25 A"/>
    <property type="chains" value="A/B/C/D/E/F=24-153"/>
</dbReference>
<dbReference type="PDB" id="3K1X">
    <property type="method" value="X-ray"/>
    <property type="resolution" value="1.98 A"/>
    <property type="chains" value="A/B/C/D/E/F=24-153"/>
</dbReference>
<dbReference type="PDB" id="3O3Q">
    <property type="method" value="X-ray"/>
    <property type="resolution" value="1.60 A"/>
    <property type="chains" value="A/B/C/D=16-155"/>
</dbReference>
<dbReference type="PDB" id="3OJ2">
    <property type="method" value="X-ray"/>
    <property type="resolution" value="2.20 A"/>
    <property type="chains" value="A/B=1-155"/>
</dbReference>
<dbReference type="PDB" id="3OJM">
    <property type="method" value="X-ray"/>
    <property type="resolution" value="2.10 A"/>
    <property type="chains" value="A=1-155"/>
</dbReference>
<dbReference type="PDB" id="3OJV">
    <property type="method" value="X-ray"/>
    <property type="resolution" value="2.60 A"/>
    <property type="chains" value="A/B=21-155"/>
</dbReference>
<dbReference type="PDB" id="3UD7">
    <property type="method" value="X-ray"/>
    <property type="resolution" value="2.80 A"/>
    <property type="chains" value="A/B/C=16-155"/>
</dbReference>
<dbReference type="PDB" id="3UD8">
    <property type="method" value="X-ray"/>
    <property type="resolution" value="2.37 A"/>
    <property type="chains" value="A/B/C=16-155"/>
</dbReference>
<dbReference type="PDB" id="3UD9">
    <property type="method" value="X-ray"/>
    <property type="resolution" value="2.34 A"/>
    <property type="chains" value="A/B/C=16-155"/>
</dbReference>
<dbReference type="PDB" id="3UDA">
    <property type="method" value="X-ray"/>
    <property type="resolution" value="2.51 A"/>
    <property type="chains" value="A/B/C=16-155"/>
</dbReference>
<dbReference type="PDB" id="4J23">
    <property type="method" value="X-ray"/>
    <property type="resolution" value="3.88 A"/>
    <property type="chains" value="B=21-155"/>
</dbReference>
<dbReference type="PDB" id="4Q91">
    <property type="method" value="X-ray"/>
    <property type="resolution" value="1.80 A"/>
    <property type="chains" value="A/B=16-155"/>
</dbReference>
<dbReference type="PDB" id="4Q9G">
    <property type="method" value="X-ray"/>
    <property type="resolution" value="1.55 A"/>
    <property type="chains" value="A/B=16-155"/>
</dbReference>
<dbReference type="PDB" id="4Q9P">
    <property type="method" value="X-ray"/>
    <property type="resolution" value="1.80 A"/>
    <property type="chains" value="A/B=16-155"/>
</dbReference>
<dbReference type="PDB" id="4QAL">
    <property type="method" value="X-ray"/>
    <property type="resolution" value="1.50 A"/>
    <property type="chains" value="A/B=16-155"/>
</dbReference>
<dbReference type="PDB" id="4QBC">
    <property type="method" value="X-ray"/>
    <property type="resolution" value="1.52 A"/>
    <property type="chains" value="A/B=16-155"/>
</dbReference>
<dbReference type="PDB" id="4QBV">
    <property type="method" value="X-ray"/>
    <property type="resolution" value="1.50 A"/>
    <property type="chains" value="A/B=16-155"/>
</dbReference>
<dbReference type="PDB" id="4QC4">
    <property type="method" value="X-ray"/>
    <property type="resolution" value="1.49 A"/>
    <property type="chains" value="A/B=16-155"/>
</dbReference>
<dbReference type="PDB" id="4QO3">
    <property type="method" value="X-ray"/>
    <property type="resolution" value="2.05 A"/>
    <property type="chains" value="A/B=16-155"/>
</dbReference>
<dbReference type="PDB" id="4XKI">
    <property type="method" value="X-ray"/>
    <property type="resolution" value="2.00 A"/>
    <property type="chains" value="A/B=16-155"/>
</dbReference>
<dbReference type="PDB" id="4YOL">
    <property type="method" value="X-ray"/>
    <property type="resolution" value="1.97 A"/>
    <property type="chains" value="A/B=16-155"/>
</dbReference>
<dbReference type="PDBsum" id="1AXM"/>
<dbReference type="PDBsum" id="1DJS"/>
<dbReference type="PDBsum" id="1DZC"/>
<dbReference type="PDBsum" id="1DZD"/>
<dbReference type="PDBsum" id="1E0O"/>
<dbReference type="PDBsum" id="1EVT"/>
<dbReference type="PDBsum" id="1HKN"/>
<dbReference type="PDBsum" id="1JQZ"/>
<dbReference type="PDBsum" id="1JT3"/>
<dbReference type="PDBsum" id="1JT4"/>
<dbReference type="PDBsum" id="1JT5"/>
<dbReference type="PDBsum" id="1JT7"/>
<dbReference type="PDBsum" id="1JTC"/>
<dbReference type="PDBsum" id="1JY0"/>
<dbReference type="PDBsum" id="1K5U"/>
<dbReference type="PDBsum" id="1K5V"/>
<dbReference type="PDBsum" id="1M16"/>
<dbReference type="PDBsum" id="1NZK"/>
<dbReference type="PDBsum" id="1P63"/>
<dbReference type="PDBsum" id="1PZZ"/>
<dbReference type="PDBsum" id="1Q03"/>
<dbReference type="PDBsum" id="1Q04"/>
<dbReference type="PDBsum" id="1RG8"/>
<dbReference type="PDBsum" id="1RML"/>
<dbReference type="PDBsum" id="1RY7"/>
<dbReference type="PDBsum" id="1YTO"/>
<dbReference type="PDBsum" id="1Z2V"/>
<dbReference type="PDBsum" id="1Z4S"/>
<dbReference type="PDBsum" id="2AFG"/>
<dbReference type="PDBsum" id="2AQZ"/>
<dbReference type="PDBsum" id="2AXM"/>
<dbReference type="PDBsum" id="2ERM"/>
<dbReference type="PDBsum" id="2HW9"/>
<dbReference type="PDBsum" id="2HWA"/>
<dbReference type="PDBsum" id="2HWM"/>
<dbReference type="PDBsum" id="2HZ9"/>
<dbReference type="PDBsum" id="2K43"/>
<dbReference type="PDBsum" id="2K4A"/>
<dbReference type="PDBsum" id="2K8R"/>
<dbReference type="PDBsum" id="2KI4"/>
<dbReference type="PDBsum" id="2KI6"/>
<dbReference type="PDBsum" id="2NTD"/>
<dbReference type="PDBsum" id="2Q9X"/>
<dbReference type="PDBsum" id="2RQ9"/>
<dbReference type="PDBsum" id="3B9U"/>
<dbReference type="PDBsum" id="3BA4"/>
<dbReference type="PDBsum" id="3BA5"/>
<dbReference type="PDBsum" id="3BA7"/>
<dbReference type="PDBsum" id="3BAD"/>
<dbReference type="PDBsum" id="3BAG"/>
<dbReference type="PDBsum" id="3BAH"/>
<dbReference type="PDBsum" id="3BAO"/>
<dbReference type="PDBsum" id="3BAQ"/>
<dbReference type="PDBsum" id="3BAU"/>
<dbReference type="PDBsum" id="3BAV"/>
<dbReference type="PDBsum" id="3BB2"/>
<dbReference type="PDBsum" id="3CQA"/>
<dbReference type="PDBsum" id="3CRG"/>
<dbReference type="PDBsum" id="3CRH"/>
<dbReference type="PDBsum" id="3CRI"/>
<dbReference type="PDBsum" id="3CU1"/>
<dbReference type="PDBsum" id="3FGM"/>
<dbReference type="PDBsum" id="3FJ8"/>
<dbReference type="PDBsum" id="3FJ9"/>
<dbReference type="PDBsum" id="3FJA"/>
<dbReference type="PDBsum" id="3FJB"/>
<dbReference type="PDBsum" id="3FJC"/>
<dbReference type="PDBsum" id="3FJD"/>
<dbReference type="PDBsum" id="3FJE"/>
<dbReference type="PDBsum" id="3FJF"/>
<dbReference type="PDBsum" id="3FJH"/>
<dbReference type="PDBsum" id="3FJI"/>
<dbReference type="PDBsum" id="3FJJ"/>
<dbReference type="PDBsum" id="3FJK"/>
<dbReference type="PDBsum" id="3HOM"/>
<dbReference type="PDBsum" id="3JUT"/>
<dbReference type="PDBsum" id="3K1X"/>
<dbReference type="PDBsum" id="3O3Q"/>
<dbReference type="PDBsum" id="3OJ2"/>
<dbReference type="PDBsum" id="3OJM"/>
<dbReference type="PDBsum" id="3OJV"/>
<dbReference type="PDBsum" id="3UD7"/>
<dbReference type="PDBsum" id="3UD8"/>
<dbReference type="PDBsum" id="3UD9"/>
<dbReference type="PDBsum" id="3UDA"/>
<dbReference type="PDBsum" id="4J23"/>
<dbReference type="PDBsum" id="4Q91"/>
<dbReference type="PDBsum" id="4Q9G"/>
<dbReference type="PDBsum" id="4Q9P"/>
<dbReference type="PDBsum" id="4QAL"/>
<dbReference type="PDBsum" id="4QBC"/>
<dbReference type="PDBsum" id="4QBV"/>
<dbReference type="PDBsum" id="4QC4"/>
<dbReference type="PDBsum" id="4QO3"/>
<dbReference type="PDBsum" id="4XKI"/>
<dbReference type="PDBsum" id="4YOL"/>
<dbReference type="BMRB" id="P05230"/>
<dbReference type="SMR" id="P05230"/>
<dbReference type="BioGRID" id="108537">
    <property type="interactions" value="44"/>
</dbReference>
<dbReference type="CORUM" id="P05230"/>
<dbReference type="DIP" id="DIP-3787N"/>
<dbReference type="FunCoup" id="P05230">
    <property type="interactions" value="1556"/>
</dbReference>
<dbReference type="IntAct" id="P05230">
    <property type="interactions" value="30"/>
</dbReference>
<dbReference type="MINT" id="P05230"/>
<dbReference type="STRING" id="9606.ENSP00000480791"/>
<dbReference type="BindingDB" id="P05230"/>
<dbReference type="ChEMBL" id="CHEMBL2120"/>
<dbReference type="DrugBank" id="DB08238">
    <property type="generic name" value="5-aminonaphthalene-2-sulfonic acid"/>
</dbReference>
<dbReference type="DrugBank" id="DB01025">
    <property type="generic name" value="Amlexanox"/>
</dbReference>
<dbReference type="DrugBank" id="DB10770">
    <property type="generic name" value="Foreskin fibroblast (neonatal)"/>
</dbReference>
<dbReference type="DrugBank" id="DB10772">
    <property type="generic name" value="Foreskin keratinocyte (neonatal)"/>
</dbReference>
<dbReference type="DrugBank" id="DB01942">
    <property type="generic name" value="Formic acid"/>
</dbReference>
<dbReference type="DrugBank" id="DB01109">
    <property type="generic name" value="Heparin"/>
</dbReference>
<dbReference type="DrugBank" id="DB03959">
    <property type="generic name" value="N,O6-Disulfo-Glucosamine"/>
</dbReference>
<dbReference type="DrugBank" id="DB04409">
    <property type="generic name" value="Naphthalene Trisulfonate"/>
</dbReference>
<dbReference type="DrugBank" id="DB02264">
    <property type="generic name" value="O2-Sulfo-Glucuronic Acid"/>
</dbReference>
<dbReference type="DrugBank" id="DB06589">
    <property type="generic name" value="Pazopanib"/>
</dbReference>
<dbReference type="DrugBank" id="DB00686">
    <property type="generic name" value="Pentosan polysulfate"/>
</dbReference>
<dbReference type="DrugBank" id="DB01901">
    <property type="generic name" value="Sucrosofate"/>
</dbReference>
<dbReference type="MoonProt" id="P05230"/>
<dbReference type="iPTMnet" id="P05230"/>
<dbReference type="PhosphoSitePlus" id="P05230"/>
<dbReference type="BioMuta" id="FGF1"/>
<dbReference type="DMDM" id="122737"/>
<dbReference type="jPOST" id="P05230"/>
<dbReference type="MassIVE" id="P05230"/>
<dbReference type="PaxDb" id="9606-ENSP00000480791"/>
<dbReference type="PeptideAtlas" id="P05230"/>
<dbReference type="ProteomicsDB" id="51826">
    <molecule id="P05230-1"/>
</dbReference>
<dbReference type="ProteomicsDB" id="51827">
    <molecule id="P05230-2"/>
</dbReference>
<dbReference type="Pumba" id="P05230"/>
<dbReference type="TopDownProteomics" id="P05230-1">
    <molecule id="P05230-1"/>
</dbReference>
<dbReference type="ABCD" id="P05230">
    <property type="antibodies" value="1 sequenced antibody"/>
</dbReference>
<dbReference type="Antibodypedia" id="1009">
    <property type="antibodies" value="765 antibodies from 44 providers"/>
</dbReference>
<dbReference type="DNASU" id="2246"/>
<dbReference type="Ensembl" id="ENST00000337706.7">
    <molecule id="P05230-1"/>
    <property type="protein sequence ID" value="ENSP00000338548.2"/>
    <property type="gene ID" value="ENSG00000113578.18"/>
</dbReference>
<dbReference type="Ensembl" id="ENST00000359370.10">
    <molecule id="P05230-1"/>
    <property type="protein sequence ID" value="ENSP00000352329.6"/>
    <property type="gene ID" value="ENSG00000113578.18"/>
</dbReference>
<dbReference type="Ensembl" id="ENST00000360966.9">
    <molecule id="P05230-2"/>
    <property type="protein sequence ID" value="ENSP00000354231.5"/>
    <property type="gene ID" value="ENSG00000113578.18"/>
</dbReference>
<dbReference type="Ensembl" id="ENST00000378046.5">
    <molecule id="P05230-1"/>
    <property type="protein sequence ID" value="ENSP00000367285.1"/>
    <property type="gene ID" value="ENSG00000113578.18"/>
</dbReference>
<dbReference type="Ensembl" id="ENST00000419524.6">
    <molecule id="P05230-1"/>
    <property type="protein sequence ID" value="ENSP00000396195.2"/>
    <property type="gene ID" value="ENSG00000113578.18"/>
</dbReference>
<dbReference type="Ensembl" id="ENST00000441680.6">
    <molecule id="P05230-1"/>
    <property type="protein sequence ID" value="ENSP00000404742.2"/>
    <property type="gene ID" value="ENSG00000113578.18"/>
</dbReference>
<dbReference type="Ensembl" id="ENST00000610990.4">
    <molecule id="P05230-1"/>
    <property type="protein sequence ID" value="ENSP00000481868.1"/>
    <property type="gene ID" value="ENSG00000113578.18"/>
</dbReference>
<dbReference type="Ensembl" id="ENST00000612258.4">
    <molecule id="P05230-1"/>
    <property type="protein sequence ID" value="ENSP00000479024.1"/>
    <property type="gene ID" value="ENSG00000113578.18"/>
</dbReference>
<dbReference type="Ensembl" id="ENST00000619447.4">
    <molecule id="P05230-1"/>
    <property type="protein sequence ID" value="ENSP00000480980.1"/>
    <property type="gene ID" value="ENSG00000113578.18"/>
</dbReference>
<dbReference type="Ensembl" id="ENST00000621536.4">
    <molecule id="P05230-1"/>
    <property type="protein sequence ID" value="ENSP00000480791.1"/>
    <property type="gene ID" value="ENSG00000113578.18"/>
</dbReference>
<dbReference type="GeneID" id="2246"/>
<dbReference type="KEGG" id="hsa:2246"/>
<dbReference type="MANE-Select" id="ENST00000337706.7">
    <property type="protein sequence ID" value="ENSP00000338548.2"/>
    <property type="RefSeq nucleotide sequence ID" value="NM_000800.5"/>
    <property type="RefSeq protein sequence ID" value="NP_000791.1"/>
</dbReference>
<dbReference type="UCSC" id="uc003lmm.5">
    <molecule id="P05230-1"/>
    <property type="organism name" value="human"/>
</dbReference>
<dbReference type="AGR" id="HGNC:3665"/>
<dbReference type="CTD" id="2246"/>
<dbReference type="DisGeNET" id="2246"/>
<dbReference type="GeneCards" id="FGF1"/>
<dbReference type="HGNC" id="HGNC:3665">
    <property type="gene designation" value="FGF1"/>
</dbReference>
<dbReference type="HPA" id="ENSG00000113578">
    <property type="expression patterns" value="Tissue enriched (brain)"/>
</dbReference>
<dbReference type="MIM" id="131220">
    <property type="type" value="gene"/>
</dbReference>
<dbReference type="neXtProt" id="NX_P05230"/>
<dbReference type="OpenTargets" id="ENSG00000113578"/>
<dbReference type="PharmGKB" id="PA28105"/>
<dbReference type="VEuPathDB" id="HostDB:ENSG00000113578"/>
<dbReference type="eggNOG" id="KOG3885">
    <property type="taxonomic scope" value="Eukaryota"/>
</dbReference>
<dbReference type="GeneTree" id="ENSGT00940000160557"/>
<dbReference type="HOGENOM" id="CLU_081609_5_1_1"/>
<dbReference type="InParanoid" id="P05230"/>
<dbReference type="OMA" id="KSWFVGL"/>
<dbReference type="OrthoDB" id="5987799at2759"/>
<dbReference type="PAN-GO" id="P05230">
    <property type="GO annotations" value="15 GO annotations based on evolutionary models"/>
</dbReference>
<dbReference type="PhylomeDB" id="P05230"/>
<dbReference type="TreeFam" id="TF317805"/>
<dbReference type="PathwayCommons" id="P05230"/>
<dbReference type="Reactome" id="R-HSA-109704">
    <property type="pathway name" value="PI3K Cascade"/>
</dbReference>
<dbReference type="Reactome" id="R-HSA-1257604">
    <property type="pathway name" value="PIP3 activates AKT signaling"/>
</dbReference>
<dbReference type="Reactome" id="R-HSA-1839122">
    <property type="pathway name" value="Signaling by activated point mutants of FGFR1"/>
</dbReference>
<dbReference type="Reactome" id="R-HSA-1839130">
    <property type="pathway name" value="Signaling by activated point mutants of FGFR3"/>
</dbReference>
<dbReference type="Reactome" id="R-HSA-190322">
    <property type="pathway name" value="FGFR4 ligand binding and activation"/>
</dbReference>
<dbReference type="Reactome" id="R-HSA-190370">
    <property type="pathway name" value="FGFR1b ligand binding and activation"/>
</dbReference>
<dbReference type="Reactome" id="R-HSA-190371">
    <property type="pathway name" value="FGFR3b ligand binding and activation"/>
</dbReference>
<dbReference type="Reactome" id="R-HSA-190372">
    <property type="pathway name" value="FGFR3c ligand binding and activation"/>
</dbReference>
<dbReference type="Reactome" id="R-HSA-190373">
    <property type="pathway name" value="FGFR1c ligand binding and activation"/>
</dbReference>
<dbReference type="Reactome" id="R-HSA-190375">
    <property type="pathway name" value="FGFR2c ligand binding and activation"/>
</dbReference>
<dbReference type="Reactome" id="R-HSA-190377">
    <property type="pathway name" value="FGFR2b ligand binding and activation"/>
</dbReference>
<dbReference type="Reactome" id="R-HSA-2033519">
    <property type="pathway name" value="Activated point mutants of FGFR2"/>
</dbReference>
<dbReference type="Reactome" id="R-HSA-2219530">
    <property type="pathway name" value="Constitutive Signaling by Aberrant PI3K in Cancer"/>
</dbReference>
<dbReference type="Reactome" id="R-HSA-5654219">
    <property type="pathway name" value="Phospholipase C-mediated cascade: FGFR1"/>
</dbReference>
<dbReference type="Reactome" id="R-HSA-5654221">
    <property type="pathway name" value="Phospholipase C-mediated cascade, FGFR2"/>
</dbReference>
<dbReference type="Reactome" id="R-HSA-5654227">
    <property type="pathway name" value="Phospholipase C-mediated cascade, FGFR3"/>
</dbReference>
<dbReference type="Reactome" id="R-HSA-5654228">
    <property type="pathway name" value="Phospholipase C-mediated cascade, FGFR4"/>
</dbReference>
<dbReference type="Reactome" id="R-HSA-5654687">
    <property type="pathway name" value="Downstream signaling of activated FGFR1"/>
</dbReference>
<dbReference type="Reactome" id="R-HSA-5654688">
    <property type="pathway name" value="SHC-mediated cascade:FGFR1"/>
</dbReference>
<dbReference type="Reactome" id="R-HSA-5654689">
    <property type="pathway name" value="PI-3K cascade:FGFR1"/>
</dbReference>
<dbReference type="Reactome" id="R-HSA-5654693">
    <property type="pathway name" value="FRS-mediated FGFR1 signaling"/>
</dbReference>
<dbReference type="Reactome" id="R-HSA-5654695">
    <property type="pathway name" value="PI-3K cascade:FGFR2"/>
</dbReference>
<dbReference type="Reactome" id="R-HSA-5654699">
    <property type="pathway name" value="SHC-mediated cascade:FGFR2"/>
</dbReference>
<dbReference type="Reactome" id="R-HSA-5654700">
    <property type="pathway name" value="FRS-mediated FGFR2 signaling"/>
</dbReference>
<dbReference type="Reactome" id="R-HSA-5654704">
    <property type="pathway name" value="SHC-mediated cascade:FGFR3"/>
</dbReference>
<dbReference type="Reactome" id="R-HSA-5654706">
    <property type="pathway name" value="FRS-mediated FGFR3 signaling"/>
</dbReference>
<dbReference type="Reactome" id="R-HSA-5654710">
    <property type="pathway name" value="PI-3K cascade:FGFR3"/>
</dbReference>
<dbReference type="Reactome" id="R-HSA-5654712">
    <property type="pathway name" value="FRS-mediated FGFR4 signaling"/>
</dbReference>
<dbReference type="Reactome" id="R-HSA-5654719">
    <property type="pathway name" value="SHC-mediated cascade:FGFR4"/>
</dbReference>
<dbReference type="Reactome" id="R-HSA-5654720">
    <property type="pathway name" value="PI-3K cascade:FGFR4"/>
</dbReference>
<dbReference type="Reactome" id="R-HSA-5654726">
    <property type="pathway name" value="Negative regulation of FGFR1 signaling"/>
</dbReference>
<dbReference type="Reactome" id="R-HSA-5654727">
    <property type="pathway name" value="Negative regulation of FGFR2 signaling"/>
</dbReference>
<dbReference type="Reactome" id="R-HSA-5654732">
    <property type="pathway name" value="Negative regulation of FGFR3 signaling"/>
</dbReference>
<dbReference type="Reactome" id="R-HSA-5654733">
    <property type="pathway name" value="Negative regulation of FGFR4 signaling"/>
</dbReference>
<dbReference type="Reactome" id="R-HSA-5655253">
    <property type="pathway name" value="Signaling by FGFR2 in disease"/>
</dbReference>
<dbReference type="Reactome" id="R-HSA-5655302">
    <property type="pathway name" value="Signaling by FGFR1 in disease"/>
</dbReference>
<dbReference type="Reactome" id="R-HSA-5655332">
    <property type="pathway name" value="Signaling by FGFR3 in disease"/>
</dbReference>
<dbReference type="Reactome" id="R-HSA-5673001">
    <property type="pathway name" value="RAF/MAP kinase cascade"/>
</dbReference>
<dbReference type="Reactome" id="R-HSA-6811558">
    <property type="pathway name" value="PI5P, PP2A and IER3 Regulate PI3K/AKT Signaling"/>
</dbReference>
<dbReference type="Reactome" id="R-HSA-8851708">
    <property type="pathway name" value="Signaling by FGFR2 IIIa TM"/>
</dbReference>
<dbReference type="SignaLink" id="P05230"/>
<dbReference type="SIGNOR" id="P05230"/>
<dbReference type="BioGRID-ORCS" id="2246">
    <property type="hits" value="16 hits in 1155 CRISPR screens"/>
</dbReference>
<dbReference type="ChiTaRS" id="FGF1">
    <property type="organism name" value="human"/>
</dbReference>
<dbReference type="EvolutionaryTrace" id="P05230"/>
<dbReference type="GeneWiki" id="FGF1"/>
<dbReference type="GenomeRNAi" id="2246"/>
<dbReference type="Pharos" id="P05230">
    <property type="development level" value="Tchem"/>
</dbReference>
<dbReference type="PRO" id="PR:P05230"/>
<dbReference type="Proteomes" id="UP000005640">
    <property type="component" value="Chromosome 5"/>
</dbReference>
<dbReference type="RNAct" id="P05230">
    <property type="molecule type" value="protein"/>
</dbReference>
<dbReference type="Bgee" id="ENSG00000113578">
    <property type="expression patterns" value="Expressed in renal glomerulus and 160 other cell types or tissues"/>
</dbReference>
<dbReference type="ExpressionAtlas" id="P05230">
    <property type="expression patterns" value="baseline and differential"/>
</dbReference>
<dbReference type="GO" id="GO:0005938">
    <property type="term" value="C:cell cortex"/>
    <property type="evidence" value="ECO:0007669"/>
    <property type="project" value="UniProtKB-SubCell"/>
</dbReference>
<dbReference type="GO" id="GO:0005737">
    <property type="term" value="C:cytoplasm"/>
    <property type="evidence" value="ECO:0000318"/>
    <property type="project" value="GO_Central"/>
</dbReference>
<dbReference type="GO" id="GO:0005829">
    <property type="term" value="C:cytosol"/>
    <property type="evidence" value="ECO:0000314"/>
    <property type="project" value="UniProtKB"/>
</dbReference>
<dbReference type="GO" id="GO:0031012">
    <property type="term" value="C:extracellular matrix"/>
    <property type="evidence" value="ECO:0007669"/>
    <property type="project" value="Ensembl"/>
</dbReference>
<dbReference type="GO" id="GO:0005576">
    <property type="term" value="C:extracellular region"/>
    <property type="evidence" value="ECO:0000314"/>
    <property type="project" value="UniProtKB"/>
</dbReference>
<dbReference type="GO" id="GO:0005615">
    <property type="term" value="C:extracellular space"/>
    <property type="evidence" value="ECO:0000314"/>
    <property type="project" value="UniProtKB"/>
</dbReference>
<dbReference type="GO" id="GO:0005654">
    <property type="term" value="C:nucleoplasm"/>
    <property type="evidence" value="ECO:0000314"/>
    <property type="project" value="HPA"/>
</dbReference>
<dbReference type="GO" id="GO:0005634">
    <property type="term" value="C:nucleus"/>
    <property type="evidence" value="ECO:0000318"/>
    <property type="project" value="GO_Central"/>
</dbReference>
<dbReference type="GO" id="GO:0005104">
    <property type="term" value="F:fibroblast growth factor receptor binding"/>
    <property type="evidence" value="ECO:0000315"/>
    <property type="project" value="UniProtKB"/>
</dbReference>
<dbReference type="GO" id="GO:0008083">
    <property type="term" value="F:growth factor activity"/>
    <property type="evidence" value="ECO:0000314"/>
    <property type="project" value="UniProtKB"/>
</dbReference>
<dbReference type="GO" id="GO:0008201">
    <property type="term" value="F:heparin binding"/>
    <property type="evidence" value="ECO:0000314"/>
    <property type="project" value="UniProtKB"/>
</dbReference>
<dbReference type="GO" id="GO:0005178">
    <property type="term" value="F:integrin binding"/>
    <property type="evidence" value="ECO:0000314"/>
    <property type="project" value="UniProtKB"/>
</dbReference>
<dbReference type="GO" id="GO:0044548">
    <property type="term" value="F:S100 protein binding"/>
    <property type="evidence" value="ECO:0000353"/>
    <property type="project" value="UniProtKB"/>
</dbReference>
<dbReference type="GO" id="GO:0032148">
    <property type="term" value="P:activation of protein kinase B activity"/>
    <property type="evidence" value="ECO:0000315"/>
    <property type="project" value="UniProtKB"/>
</dbReference>
<dbReference type="GO" id="GO:0009653">
    <property type="term" value="P:anatomical structure morphogenesis"/>
    <property type="evidence" value="ECO:0000304"/>
    <property type="project" value="ProtInc"/>
</dbReference>
<dbReference type="GO" id="GO:0001525">
    <property type="term" value="P:angiogenesis"/>
    <property type="evidence" value="ECO:0007669"/>
    <property type="project" value="UniProtKB-KW"/>
</dbReference>
<dbReference type="GO" id="GO:0060681">
    <property type="term" value="P:branch elongation involved in ureteric bud branching"/>
    <property type="evidence" value="ECO:0000314"/>
    <property type="project" value="UniProtKB"/>
</dbReference>
<dbReference type="GO" id="GO:0034605">
    <property type="term" value="P:cellular response to heat"/>
    <property type="evidence" value="ECO:0000314"/>
    <property type="project" value="UniProtKB"/>
</dbReference>
<dbReference type="GO" id="GO:0050673">
    <property type="term" value="P:epithelial cell proliferation"/>
    <property type="evidence" value="ECO:0007669"/>
    <property type="project" value="Ensembl"/>
</dbReference>
<dbReference type="GO" id="GO:0008543">
    <property type="term" value="P:fibroblast growth factor receptor signaling pathway"/>
    <property type="evidence" value="ECO:0000314"/>
    <property type="project" value="UniProtKB"/>
</dbReference>
<dbReference type="GO" id="GO:0030324">
    <property type="term" value="P:lung development"/>
    <property type="evidence" value="ECO:0007669"/>
    <property type="project" value="Ensembl"/>
</dbReference>
<dbReference type="GO" id="GO:0072163">
    <property type="term" value="P:mesonephric epithelium development"/>
    <property type="evidence" value="ECO:0000314"/>
    <property type="project" value="UniProtKB"/>
</dbReference>
<dbReference type="GO" id="GO:0022008">
    <property type="term" value="P:neurogenesis"/>
    <property type="evidence" value="ECO:0000318"/>
    <property type="project" value="GO_Central"/>
</dbReference>
<dbReference type="GO" id="GO:0001759">
    <property type="term" value="P:organ induction"/>
    <property type="evidence" value="ECO:0007669"/>
    <property type="project" value="Ensembl"/>
</dbReference>
<dbReference type="GO" id="GO:0045766">
    <property type="term" value="P:positive regulation of angiogenesis"/>
    <property type="evidence" value="ECO:0000314"/>
    <property type="project" value="UniProtKB"/>
</dbReference>
<dbReference type="GO" id="GO:0051781">
    <property type="term" value="P:positive regulation of cell division"/>
    <property type="evidence" value="ECO:0000314"/>
    <property type="project" value="UniProtKB"/>
</dbReference>
<dbReference type="GO" id="GO:0030335">
    <property type="term" value="P:positive regulation of cell migration"/>
    <property type="evidence" value="ECO:0000314"/>
    <property type="project" value="UniProtKB"/>
</dbReference>
<dbReference type="GO" id="GO:0008284">
    <property type="term" value="P:positive regulation of cell population proliferation"/>
    <property type="evidence" value="ECO:0000315"/>
    <property type="project" value="UniProtKB"/>
</dbReference>
<dbReference type="GO" id="GO:0045542">
    <property type="term" value="P:positive regulation of cholesterol biosynthetic process"/>
    <property type="evidence" value="ECO:0000314"/>
    <property type="project" value="BHF-UCL"/>
</dbReference>
<dbReference type="GO" id="GO:0010595">
    <property type="term" value="P:positive regulation of endothelial cell migration"/>
    <property type="evidence" value="ECO:0000315"/>
    <property type="project" value="UniProtKB"/>
</dbReference>
<dbReference type="GO" id="GO:0050679">
    <property type="term" value="P:positive regulation of epithelial cell proliferation"/>
    <property type="evidence" value="ECO:0007669"/>
    <property type="project" value="Ensembl"/>
</dbReference>
<dbReference type="GO" id="GO:0070374">
    <property type="term" value="P:positive regulation of ERK1 and ERK2 cascade"/>
    <property type="evidence" value="ECO:0000315"/>
    <property type="project" value="UniProtKB"/>
</dbReference>
<dbReference type="GO" id="GO:1902533">
    <property type="term" value="P:positive regulation of intracellular signal transduction"/>
    <property type="evidence" value="ECO:0000314"/>
    <property type="project" value="BHF-UCL"/>
</dbReference>
<dbReference type="GO" id="GO:0043406">
    <property type="term" value="P:positive regulation of MAP kinase activity"/>
    <property type="evidence" value="ECO:0000314"/>
    <property type="project" value="UniProtKB"/>
</dbReference>
<dbReference type="GO" id="GO:0043410">
    <property type="term" value="P:positive regulation of MAPK cascade"/>
    <property type="evidence" value="ECO:0000318"/>
    <property type="project" value="GO_Central"/>
</dbReference>
<dbReference type="GO" id="GO:1903672">
    <property type="term" value="P:positive regulation of sprouting angiogenesis"/>
    <property type="evidence" value="ECO:0000315"/>
    <property type="project" value="UniProtKB"/>
</dbReference>
<dbReference type="GO" id="GO:0045944">
    <property type="term" value="P:positive regulation of transcription by RNA polymerase II"/>
    <property type="evidence" value="ECO:0000314"/>
    <property type="project" value="BHF-UCL"/>
</dbReference>
<dbReference type="GO" id="GO:0030334">
    <property type="term" value="P:regulation of cell migration"/>
    <property type="evidence" value="ECO:0000318"/>
    <property type="project" value="GO_Central"/>
</dbReference>
<dbReference type="GO" id="GO:2000544">
    <property type="term" value="P:regulation of endothelial cell chemotaxis to fibroblast growth factor"/>
    <property type="evidence" value="ECO:0000314"/>
    <property type="project" value="UniProtKB"/>
</dbReference>
<dbReference type="GO" id="GO:1901509">
    <property type="term" value="P:regulation of endothelial tube morphogenesis"/>
    <property type="evidence" value="ECO:0000315"/>
    <property type="project" value="UniProtKB"/>
</dbReference>
<dbReference type="GO" id="GO:0007165">
    <property type="term" value="P:signal transduction"/>
    <property type="evidence" value="ECO:0000303"/>
    <property type="project" value="ProtInc"/>
</dbReference>
<dbReference type="GO" id="GO:0042060">
    <property type="term" value="P:wound healing"/>
    <property type="evidence" value="ECO:0000314"/>
    <property type="project" value="UniProtKB"/>
</dbReference>
<dbReference type="CDD" id="cd23313">
    <property type="entry name" value="beta-trefoil_FGF1"/>
    <property type="match status" value="1"/>
</dbReference>
<dbReference type="FunFam" id="2.80.10.50:FF:000020">
    <property type="entry name" value="Fibroblast growth factor 1"/>
    <property type="match status" value="1"/>
</dbReference>
<dbReference type="Gene3D" id="2.80.10.50">
    <property type="match status" value="1"/>
</dbReference>
<dbReference type="InterPro" id="IPR002209">
    <property type="entry name" value="Fibroblast_GF_fam"/>
</dbReference>
<dbReference type="InterPro" id="IPR008996">
    <property type="entry name" value="IL1/FGF"/>
</dbReference>
<dbReference type="PANTHER" id="PTHR11486">
    <property type="entry name" value="FIBROBLAST GROWTH FACTOR"/>
    <property type="match status" value="1"/>
</dbReference>
<dbReference type="Pfam" id="PF00167">
    <property type="entry name" value="FGF"/>
    <property type="match status" value="1"/>
</dbReference>
<dbReference type="PRINTS" id="PR00263">
    <property type="entry name" value="HBGFFGF"/>
</dbReference>
<dbReference type="PRINTS" id="PR00262">
    <property type="entry name" value="IL1HBGF"/>
</dbReference>
<dbReference type="SMART" id="SM00442">
    <property type="entry name" value="FGF"/>
    <property type="match status" value="1"/>
</dbReference>
<dbReference type="SUPFAM" id="SSF50353">
    <property type="entry name" value="Cytokine"/>
    <property type="match status" value="1"/>
</dbReference>
<dbReference type="PROSITE" id="PS00247">
    <property type="entry name" value="HBGF_FGF"/>
    <property type="match status" value="1"/>
</dbReference>
<comment type="function">
    <text evidence="9 10 12 13 15 18">Plays an important role in the regulation of cell survival, cell division, angiogenesis, cell differentiation and cell migration. Functions as a potent mitogen in vitro. Acts as a ligand for FGFR1 and integrins. Binds to FGFR1 in the presence of heparin leading to FGFR1 dimerization and activation via sequential autophosphorylation on tyrosine residues which act as docking sites for interacting proteins, leading to the activation of several signaling cascades. Binds to integrin ITGAV:ITGB3. Its binding to integrin, subsequent ternary complex formation with integrin and FGFR1, and the recruitment of PTPN11 to the complex are essential for FGF1 signaling. Induces the phosphorylation and activation of FGFR1, FRS2, MAPK3/ERK1, MAPK1/ERK2 and AKT1 (PubMed:18441324, PubMed:20422052). Can induce angiogenesis (PubMed:23469107).</text>
</comment>
<comment type="subunit">
    <text evidence="3 4 5 6 7 8 9 11 12 13 17 18 19">Monomer. Homodimer. Interacts with FGFR1, FGFR2, FGFR3 and FGFR4. Affinity between fibroblast growth factors (FGFs) and their receptors is increased by heparan sulfate glycosaminoglycans that function as coreceptors. Found in a complex with FGFBP1, FGF1 and FGF2. Interacts with FGFBP1. Part of a Cu(2+)-dependent multiprotein aggregate containing FGF1, S100A13 and SYT1. Interacts with SYT1. Interacts with S100A13. Interacts with LRRC59. Interacts with CSNKA, CSNKB and FIBP. While binding with LRRC59, CSNKA and FIBP seem mutually exclusive, CSNKB and FIBP may cooperatively interact with FGF1. Forms a ternary complex with FGFR1 and ITGAV:ITGB3 and induces the recruitment of PTPN11 to the complex (PubMed:20422052).</text>
</comment>
<comment type="interaction">
    <interactant intactId="EBI-698068">
        <id>P05230</id>
    </interactant>
    <interactant intactId="EBI-1028277">
        <id>P11362</id>
        <label>FGFR1</label>
    </interactant>
    <organismsDiffer>false</organismsDiffer>
    <experiments>5</experiments>
</comment>
<comment type="interaction">
    <interactant intactId="EBI-698068">
        <id>P05230</id>
    </interactant>
    <interactant intactId="EBI-1028658">
        <id>P21802</id>
        <label>FGFR2</label>
    </interactant>
    <organismsDiffer>false</organismsDiffer>
    <experiments>3</experiments>
</comment>
<comment type="interaction">
    <interactant intactId="EBI-698068">
        <id>P05230</id>
    </interactant>
    <interactant intactId="EBI-348399">
        <id>P22607</id>
        <label>FGFR3</label>
    </interactant>
    <organismsDiffer>false</organismsDiffer>
    <experiments>3</experiments>
</comment>
<comment type="interaction">
    <interactant intactId="EBI-698068">
        <id>P05230</id>
    </interactant>
    <interactant intactId="EBI-357430">
        <id>P61758</id>
        <label>VBP1</label>
    </interactant>
    <organismsDiffer>false</organismsDiffer>
    <experiments>3</experiments>
</comment>
<comment type="interaction">
    <interactant intactId="EBI-15489950">
        <id>P05230-1</id>
    </interactant>
    <interactant intactId="EBI-15489960">
        <id>P21802-1</id>
        <label>FGFR2</label>
    </interactant>
    <organismsDiffer>false</organismsDiffer>
    <experiments>2</experiments>
</comment>
<comment type="interaction">
    <interactant intactId="EBI-6880860">
        <id>PRO_0000008908</id>
    </interactant>
    <interactant intactId="EBI-1028658">
        <id>P21802</id>
        <label>FGFR2</label>
    </interactant>
    <organismsDiffer>false</organismsDiffer>
    <experiments>5</experiments>
</comment>
<comment type="subcellular location">
    <subcellularLocation>
        <location>Secreted</location>
    </subcellularLocation>
    <subcellularLocation>
        <location>Cytoplasm</location>
    </subcellularLocation>
    <subcellularLocation>
        <location>Cytoplasm</location>
        <location>Cell cortex</location>
    </subcellularLocation>
    <subcellularLocation>
        <location>Cytoplasm</location>
        <location>Cytosol</location>
    </subcellularLocation>
    <subcellularLocation>
        <location>Nucleus</location>
    </subcellularLocation>
    <text evidence="1">Lacks a cleavable signal sequence. Within the cytoplasm, it is transported to the cell membrane and then secreted by a non-classical pathway that requires Cu(2+) ions and S100A13. Secreted in a complex with SYT1 (By similarity). Binding of exogenous FGF1 to FGFR facilitates endocytosis followed by translocation of FGF1 across endosomal membrane into the cytosol. Nuclear import from the cytosol requires the classical nuclear import machinery, involving proteins KPNA1 and KPNB1, as well as LRRC59.</text>
</comment>
<comment type="alternative products">
    <event type="alternative splicing"/>
    <isoform>
        <id>P05230-1</id>
        <name>1</name>
        <sequence type="displayed"/>
    </isoform>
    <isoform>
        <id>P05230-2</id>
        <name>2</name>
        <sequence type="described" ref="VSP_036536 VSP_036537"/>
    </isoform>
</comment>
<comment type="tissue specificity">
    <text evidence="7 16">Predominantly expressed in kidney and brain. Detected at much lower levels in heart and skeletal muscle.</text>
</comment>
<comment type="PTM">
    <text evidence="14">In the nucleus, phosphorylated by PKC/PRKCD.</text>
</comment>
<comment type="similarity">
    <text evidence="22">Belongs to the heparin-binding growth factors family.</text>
</comment>
<keyword id="KW-0002">3D-structure</keyword>
<keyword id="KW-0007">Acetylation</keyword>
<keyword id="KW-0025">Alternative splicing</keyword>
<keyword id="KW-0037">Angiogenesis</keyword>
<keyword id="KW-0963">Cytoplasm</keyword>
<keyword id="KW-0217">Developmental protein</keyword>
<keyword id="KW-0221">Differentiation</keyword>
<keyword id="KW-0903">Direct protein sequencing</keyword>
<keyword id="KW-0339">Growth factor</keyword>
<keyword id="KW-0358">Heparin-binding</keyword>
<keyword id="KW-0497">Mitogen</keyword>
<keyword id="KW-0539">Nucleus</keyword>
<keyword id="KW-0597">Phosphoprotein</keyword>
<keyword id="KW-1267">Proteomics identification</keyword>
<keyword id="KW-1185">Reference proteome</keyword>
<keyword id="KW-0964">Secreted</keyword>
<protein>
    <recommendedName>
        <fullName>Fibroblast growth factor 1</fullName>
        <shortName>FGF-1</shortName>
    </recommendedName>
    <alternativeName>
        <fullName>Acidic fibroblast growth factor</fullName>
        <shortName>aFGF</shortName>
    </alternativeName>
    <alternativeName>
        <fullName>Endothelial cell growth factor</fullName>
        <shortName>ECGF</shortName>
    </alternativeName>
    <alternativeName>
        <fullName>Heparin-binding growth factor 1</fullName>
        <shortName>HBGF-1</shortName>
    </alternativeName>
</protein>
<sequence>MAEGEITTFTALTEKFNLPPGNYKKPKLLYCSNGGHFLRILPDGTVDGTRDRSDQHIQLQLSAESVGEVYIKSTETGQYLAMDTDGLLYGSQTPNEECLFLERLEENHYNTYISKKHAEKNWFVGLKKNGSCKRGPRTHYGQKAILFLPLPVSSD</sequence>
<reference key="1">
    <citation type="journal article" date="1986" name="Science">
        <title>Human endothelial cell growth factor: cloning, nucleotide sequence, and chromosome localization.</title>
        <authorList>
            <person name="Jaye M."/>
            <person name="Howk R."/>
            <person name="Burgess W."/>
            <person name="Ricca G.A."/>
            <person name="Chiu I.-M."/>
            <person name="Ravera M.W."/>
            <person name="O'Brien S.J."/>
            <person name="Modi W.S."/>
            <person name="Maciag T."/>
            <person name="Drohan W.N."/>
        </authorList>
    </citation>
    <scope>NUCLEOTIDE SEQUENCE [MRNA] (ISOFORM 1)</scope>
    <source>
        <tissue>Brain stem</tissue>
    </source>
</reference>
<reference key="2">
    <citation type="journal article" date="1989" name="Biochem. Biophys. Res. Commun.">
        <title>Structural analysis of the gene for human acidic fibroblast growth factor.</title>
        <authorList>
            <person name="Mergia A."/>
            <person name="Tischer E."/>
            <person name="Graves D."/>
            <person name="Tumolo A."/>
            <person name="Miller J."/>
            <person name="Gospodarowicz D."/>
            <person name="Abraham J.A."/>
            <person name="Shipley G.D."/>
            <person name="Fiddes J.C."/>
        </authorList>
    </citation>
    <scope>NUCLEOTIDE SEQUENCE [GENOMIC DNA]</scope>
</reference>
<reference key="3">
    <citation type="journal article" date="1989" name="Mol. Cell. Biol.">
        <title>Cloning of the gene coding for human class 1 heparin-binding growth factor and its expression in fetal tissues.</title>
        <authorList>
            <person name="Wang W.P."/>
            <person name="Lehtoma K."/>
            <person name="Varban M.L."/>
            <person name="Krishnan I."/>
            <person name="Chiu I.M."/>
        </authorList>
    </citation>
    <scope>NUCLEOTIDE SEQUENCE [GENOMIC DNA]</scope>
    <source>
        <tissue>Brain stem</tissue>
    </source>
</reference>
<reference key="4">
    <citation type="journal article" date="1990" name="Oncogene">
        <title>Alternative splicing generates two forms of mRNA coding for human heparin-binding growth factor 1.</title>
        <authorList>
            <person name="Chiu I.M."/>
            <person name="Wang W.P."/>
            <person name="Lehtoma K."/>
        </authorList>
    </citation>
    <scope>NUCLEOTIDE SEQUENCE [MRNA] (ISOFORM 1)</scope>
    <source>
        <tissue>Brain stem</tissue>
    </source>
</reference>
<reference key="5">
    <citation type="journal article" date="1991" name="Oncogene">
        <title>Cloning and sequence analysis of the human acidic fibroblast growth factor gene and its preservation in leukemia patients.</title>
        <authorList>
            <person name="Wang W.P."/>
            <person name="Quick D."/>
            <person name="Balcerzak S.P."/>
            <person name="Needleman S.W."/>
            <person name="Chiu I.M."/>
        </authorList>
    </citation>
    <scope>NUCLEOTIDE SEQUENCE [GENOMIC DNA]</scope>
</reference>
<reference key="6">
    <citation type="journal article" date="1992" name="J. Exp. Med.">
        <title>An acidic fibroblast growth factor protein generated by alternate splicing acts like an antagonist.</title>
        <authorList>
            <person name="Li Y.L."/>
            <person name="Kha H."/>
            <person name="Golden J.A."/>
            <person name="Migchielsen A.A.J."/>
            <person name="Goetzl E.J."/>
            <person name="Turck E.J."/>
        </authorList>
    </citation>
    <scope>NUCLEOTIDE SEQUENCE [MRNA] (ISOFORM 1)</scope>
</reference>
<reference key="7">
    <citation type="journal article" date="1993" name="Transplantation">
        <title>The expression of acidic fibroblast growth factor (heparin-binding growth factor-1) and cytokine genes in human cardiac allografts and T cells.</title>
        <authorList>
            <person name="Zhao X.M."/>
            <person name="Yeoh T.K."/>
            <person name="Hiebert M."/>
            <person name="Frist W.H."/>
            <person name="Miller G.G."/>
        </authorList>
    </citation>
    <scope>NUCLEOTIDE SEQUENCE [MRNA] (ISOFORM 2)</scope>
    <scope>NUCLEOTIDE SEQUENCE [MRNA] OF 1-154 (ISOFORM 1)</scope>
    <scope>TISSUE SPECIFICITY</scope>
</reference>
<reference key="8">
    <citation type="submission" date="2004-04" db="EMBL/GenBank/DDBJ databases">
        <authorList>
            <consortium name="NIEHS SNPs program"/>
        </authorList>
    </citation>
    <scope>NUCLEOTIDE SEQUENCE [GENOMIC DNA]</scope>
    <scope>VARIANT GLU-21</scope>
</reference>
<reference key="9">
    <citation type="journal article" date="2004" name="Nat. Genet.">
        <title>Complete sequencing and characterization of 21,243 full-length human cDNAs.</title>
        <authorList>
            <person name="Ota T."/>
            <person name="Suzuki Y."/>
            <person name="Nishikawa T."/>
            <person name="Otsuki T."/>
            <person name="Sugiyama T."/>
            <person name="Irie R."/>
            <person name="Wakamatsu A."/>
            <person name="Hayashi K."/>
            <person name="Sato H."/>
            <person name="Nagai K."/>
            <person name="Kimura K."/>
            <person name="Makita H."/>
            <person name="Sekine M."/>
            <person name="Obayashi M."/>
            <person name="Nishi T."/>
            <person name="Shibahara T."/>
            <person name="Tanaka T."/>
            <person name="Ishii S."/>
            <person name="Yamamoto J."/>
            <person name="Saito K."/>
            <person name="Kawai Y."/>
            <person name="Isono Y."/>
            <person name="Nakamura Y."/>
            <person name="Nagahari K."/>
            <person name="Murakami K."/>
            <person name="Yasuda T."/>
            <person name="Iwayanagi T."/>
            <person name="Wagatsuma M."/>
            <person name="Shiratori A."/>
            <person name="Sudo H."/>
            <person name="Hosoiri T."/>
            <person name="Kaku Y."/>
            <person name="Kodaira H."/>
            <person name="Kondo H."/>
            <person name="Sugawara M."/>
            <person name="Takahashi M."/>
            <person name="Kanda K."/>
            <person name="Yokoi T."/>
            <person name="Furuya T."/>
            <person name="Kikkawa E."/>
            <person name="Omura Y."/>
            <person name="Abe K."/>
            <person name="Kamihara K."/>
            <person name="Katsuta N."/>
            <person name="Sato K."/>
            <person name="Tanikawa M."/>
            <person name="Yamazaki M."/>
            <person name="Ninomiya K."/>
            <person name="Ishibashi T."/>
            <person name="Yamashita H."/>
            <person name="Murakawa K."/>
            <person name="Fujimori K."/>
            <person name="Tanai H."/>
            <person name="Kimata M."/>
            <person name="Watanabe M."/>
            <person name="Hiraoka S."/>
            <person name="Chiba Y."/>
            <person name="Ishida S."/>
            <person name="Ono Y."/>
            <person name="Takiguchi S."/>
            <person name="Watanabe S."/>
            <person name="Yosida M."/>
            <person name="Hotuta T."/>
            <person name="Kusano J."/>
            <person name="Kanehori K."/>
            <person name="Takahashi-Fujii A."/>
            <person name="Hara H."/>
            <person name="Tanase T.-O."/>
            <person name="Nomura Y."/>
            <person name="Togiya S."/>
            <person name="Komai F."/>
            <person name="Hara R."/>
            <person name="Takeuchi K."/>
            <person name="Arita M."/>
            <person name="Imose N."/>
            <person name="Musashino K."/>
            <person name="Yuuki H."/>
            <person name="Oshima A."/>
            <person name="Sasaki N."/>
            <person name="Aotsuka S."/>
            <person name="Yoshikawa Y."/>
            <person name="Matsunawa H."/>
            <person name="Ichihara T."/>
            <person name="Shiohata N."/>
            <person name="Sano S."/>
            <person name="Moriya S."/>
            <person name="Momiyama H."/>
            <person name="Satoh N."/>
            <person name="Takami S."/>
            <person name="Terashima Y."/>
            <person name="Suzuki O."/>
            <person name="Nakagawa S."/>
            <person name="Senoh A."/>
            <person name="Mizoguchi H."/>
            <person name="Goto Y."/>
            <person name="Shimizu F."/>
            <person name="Wakebe H."/>
            <person name="Hishigaki H."/>
            <person name="Watanabe T."/>
            <person name="Sugiyama A."/>
            <person name="Takemoto M."/>
            <person name="Kawakami B."/>
            <person name="Yamazaki M."/>
            <person name="Watanabe K."/>
            <person name="Kumagai A."/>
            <person name="Itakura S."/>
            <person name="Fukuzumi Y."/>
            <person name="Fujimori Y."/>
            <person name="Komiyama M."/>
            <person name="Tashiro H."/>
            <person name="Tanigami A."/>
            <person name="Fujiwara T."/>
            <person name="Ono T."/>
            <person name="Yamada K."/>
            <person name="Fujii Y."/>
            <person name="Ozaki K."/>
            <person name="Hirao M."/>
            <person name="Ohmori Y."/>
            <person name="Kawabata A."/>
            <person name="Hikiji T."/>
            <person name="Kobatake N."/>
            <person name="Inagaki H."/>
            <person name="Ikema Y."/>
            <person name="Okamoto S."/>
            <person name="Okitani R."/>
            <person name="Kawakami T."/>
            <person name="Noguchi S."/>
            <person name="Itoh T."/>
            <person name="Shigeta K."/>
            <person name="Senba T."/>
            <person name="Matsumura K."/>
            <person name="Nakajima Y."/>
            <person name="Mizuno T."/>
            <person name="Morinaga M."/>
            <person name="Sasaki M."/>
            <person name="Togashi T."/>
            <person name="Oyama M."/>
            <person name="Hata H."/>
            <person name="Watanabe M."/>
            <person name="Komatsu T."/>
            <person name="Mizushima-Sugano J."/>
            <person name="Satoh T."/>
            <person name="Shirai Y."/>
            <person name="Takahashi Y."/>
            <person name="Nakagawa K."/>
            <person name="Okumura K."/>
            <person name="Nagase T."/>
            <person name="Nomura N."/>
            <person name="Kikuchi H."/>
            <person name="Masuho Y."/>
            <person name="Yamashita R."/>
            <person name="Nakai K."/>
            <person name="Yada T."/>
            <person name="Nakamura Y."/>
            <person name="Ohara O."/>
            <person name="Isogai T."/>
            <person name="Sugano S."/>
        </authorList>
    </citation>
    <scope>NUCLEOTIDE SEQUENCE [LARGE SCALE MRNA] (ISOFORM 1)</scope>
    <source>
        <tissue>Cerebellum</tissue>
    </source>
</reference>
<reference key="10">
    <citation type="journal article" date="2004" name="Nature">
        <title>The DNA sequence and comparative analysis of human chromosome 5.</title>
        <authorList>
            <person name="Schmutz J."/>
            <person name="Martin J."/>
            <person name="Terry A."/>
            <person name="Couronne O."/>
            <person name="Grimwood J."/>
            <person name="Lowry S."/>
            <person name="Gordon L.A."/>
            <person name="Scott D."/>
            <person name="Xie G."/>
            <person name="Huang W."/>
            <person name="Hellsten U."/>
            <person name="Tran-Gyamfi M."/>
            <person name="She X."/>
            <person name="Prabhakar S."/>
            <person name="Aerts A."/>
            <person name="Altherr M."/>
            <person name="Bajorek E."/>
            <person name="Black S."/>
            <person name="Branscomb E."/>
            <person name="Caoile C."/>
            <person name="Challacombe J.F."/>
            <person name="Chan Y.M."/>
            <person name="Denys M."/>
            <person name="Detter J.C."/>
            <person name="Escobar J."/>
            <person name="Flowers D."/>
            <person name="Fotopulos D."/>
            <person name="Glavina T."/>
            <person name="Gomez M."/>
            <person name="Gonzales E."/>
            <person name="Goodstein D."/>
            <person name="Grigoriev I."/>
            <person name="Groza M."/>
            <person name="Hammon N."/>
            <person name="Hawkins T."/>
            <person name="Haydu L."/>
            <person name="Israni S."/>
            <person name="Jett J."/>
            <person name="Kadner K."/>
            <person name="Kimball H."/>
            <person name="Kobayashi A."/>
            <person name="Lopez F."/>
            <person name="Lou Y."/>
            <person name="Martinez D."/>
            <person name="Medina C."/>
            <person name="Morgan J."/>
            <person name="Nandkeshwar R."/>
            <person name="Noonan J.P."/>
            <person name="Pitluck S."/>
            <person name="Pollard M."/>
            <person name="Predki P."/>
            <person name="Priest J."/>
            <person name="Ramirez L."/>
            <person name="Retterer J."/>
            <person name="Rodriguez A."/>
            <person name="Rogers S."/>
            <person name="Salamov A."/>
            <person name="Salazar A."/>
            <person name="Thayer N."/>
            <person name="Tice H."/>
            <person name="Tsai M."/>
            <person name="Ustaszewska A."/>
            <person name="Vo N."/>
            <person name="Wheeler J."/>
            <person name="Wu K."/>
            <person name="Yang J."/>
            <person name="Dickson M."/>
            <person name="Cheng J.-F."/>
            <person name="Eichler E.E."/>
            <person name="Olsen A."/>
            <person name="Pennacchio L.A."/>
            <person name="Rokhsar D.S."/>
            <person name="Richardson P."/>
            <person name="Lucas S.M."/>
            <person name="Myers R.M."/>
            <person name="Rubin E.M."/>
        </authorList>
    </citation>
    <scope>NUCLEOTIDE SEQUENCE [LARGE SCALE GENOMIC DNA]</scope>
</reference>
<reference key="11">
    <citation type="submission" date="2005-09" db="EMBL/GenBank/DDBJ databases">
        <authorList>
            <person name="Mural R.J."/>
            <person name="Istrail S."/>
            <person name="Sutton G.G."/>
            <person name="Florea L."/>
            <person name="Halpern A.L."/>
            <person name="Mobarry C.M."/>
            <person name="Lippert R."/>
            <person name="Walenz B."/>
            <person name="Shatkay H."/>
            <person name="Dew I."/>
            <person name="Miller J.R."/>
            <person name="Flanigan M.J."/>
            <person name="Edwards N.J."/>
            <person name="Bolanos R."/>
            <person name="Fasulo D."/>
            <person name="Halldorsson B.V."/>
            <person name="Hannenhalli S."/>
            <person name="Turner R."/>
            <person name="Yooseph S."/>
            <person name="Lu F."/>
            <person name="Nusskern D.R."/>
            <person name="Shue B.C."/>
            <person name="Zheng X.H."/>
            <person name="Zhong F."/>
            <person name="Delcher A.L."/>
            <person name="Huson D.H."/>
            <person name="Kravitz S.A."/>
            <person name="Mouchard L."/>
            <person name="Reinert K."/>
            <person name="Remington K.A."/>
            <person name="Clark A.G."/>
            <person name="Waterman M.S."/>
            <person name="Eichler E.E."/>
            <person name="Adams M.D."/>
            <person name="Hunkapiller M.W."/>
            <person name="Myers E.W."/>
            <person name="Venter J.C."/>
        </authorList>
    </citation>
    <scope>NUCLEOTIDE SEQUENCE [LARGE SCALE GENOMIC DNA]</scope>
</reference>
<reference key="12">
    <citation type="journal article" date="2004" name="Genome Res.">
        <title>The status, quality, and expansion of the NIH full-length cDNA project: the Mammalian Gene Collection (MGC).</title>
        <authorList>
            <consortium name="The MGC Project Team"/>
        </authorList>
    </citation>
    <scope>NUCLEOTIDE SEQUENCE [LARGE SCALE MRNA] (ISOFORM 1)</scope>
    <source>
        <tissue>Liver</tissue>
    </source>
</reference>
<reference key="13">
    <citation type="journal article" date="1990" name="Biochem. Biophys. Res. Commun.">
        <title>The gene for human acidic fibroblast growth factor encodes two upstream exons alternatively spliced to the first coding exon.</title>
        <authorList>
            <person name="Crumley G."/>
            <person name="Dionne C.A."/>
            <person name="Jaye M."/>
        </authorList>
    </citation>
    <scope>NUCLEOTIDE SEQUENCE [MRNA] OF 1-40 (ISOFORMS 1/2)</scope>
</reference>
<reference key="14">
    <citation type="journal article" date="1986" name="Biochemistry">
        <title>Human class 1 heparin-binding growth factor: structure and homology to bovine acidic brain fibroblast growth factor.</title>
        <authorList>
            <person name="Harper J.W."/>
            <person name="Strydom D.J."/>
            <person name="Lobb R.R."/>
        </authorList>
    </citation>
    <scope>PROTEIN SEQUENCE OF 16-155 (ISOFORM 1)</scope>
</reference>
<reference key="15">
    <citation type="journal article" date="1986" name="Biochem. Biophys. Res. Commun.">
        <title>The complete amino acid sequence of human brain-derived acidic fibroblast growth factor.</title>
        <authorList>
            <person name="Gimenez-Gallego G."/>
            <person name="Conn G."/>
            <person name="Hatcher V.B."/>
            <person name="Thomas K.A."/>
        </authorList>
    </citation>
    <scope>PROTEIN SEQUENCE OF 16-155 (ISOFORM 1)</scope>
</reference>
<reference key="16">
    <citation type="journal article" date="1986" name="Biochem. Biophys. Res. Commun.">
        <title>Amino acid sequence of human acidic fibroblast growth factor.</title>
        <authorList>
            <person name="Gautschi-Sova P."/>
            <person name="Mueller T."/>
            <person name="Boehlen P."/>
        </authorList>
    </citation>
    <scope>PROTEIN SEQUENCE OF 16-155 (ISOFORM 1)</scope>
</reference>
<reference key="17">
    <citation type="journal article" date="1986" name="Biochem. Biophys. Res. Commun.">
        <title>Human brain-derived acidic and basic fibroblast growth factors: amino terminal sequences and specific mitogenic activities.</title>
        <authorList>
            <person name="Gimenez-Gallego G."/>
            <person name="Conn G."/>
            <person name="Hatcher V.B."/>
            <person name="Thomas K.A."/>
        </authorList>
    </citation>
    <scope>PROTEIN SEQUENCE OF 16-47 (ISOFORMS 1/2)</scope>
</reference>
<reference key="18">
    <citation type="journal article" date="1986" name="FEBS Lett.">
        <title>Partial molecular characterization of endothelial cell mitogens from human brain: acidic and basic fibroblast growth factors.</title>
        <authorList>
            <person name="Gautschi P."/>
            <person name="Frater-Schroeder M."/>
            <person name="Boehlen P."/>
        </authorList>
    </citation>
    <scope>PROTEIN SEQUENCE OF 16-49 (ISOFORMS 1/2)</scope>
</reference>
<reference key="19">
    <citation type="journal article" date="1991" name="J. Biol. Chem.">
        <title>Characterization and molecular cloning of a putative binding protein for heparin-binding growth factors.</title>
        <authorList>
            <person name="Wu D.Q."/>
            <person name="Kan M.K."/>
            <person name="Sato G.H."/>
            <person name="Okamoto T."/>
            <person name="Sato J.D."/>
        </authorList>
    </citation>
    <scope>IDENTIFICATION IN A COMPLEX WITH FGFBP1 AND FGF2</scope>
    <scope>INTERACTION WITH FGFBP1</scope>
</reference>
<reference key="20">
    <citation type="journal article" date="1996" name="J. Biol. Chem.">
        <title>Receptor specificity of the fibroblast growth factor family.</title>
        <authorList>
            <person name="Ornitz D.M."/>
            <person name="Xu J."/>
            <person name="Colvin J.S."/>
            <person name="McEwen D.G."/>
            <person name="MacArthur C.A."/>
            <person name="Coulier F."/>
            <person name="Gao G."/>
            <person name="Goldfarb M."/>
        </authorList>
    </citation>
    <scope>INTERACTION WITH FGFR1; FGFR2; FGFR3 AND FGFR4</scope>
    <scope>FUNCTION IN CELL PROLIFERATION</scope>
</reference>
<reference key="21">
    <citation type="journal article" date="2001" name="J. Biol. Chem.">
        <title>Copper induces the assembly of a multiprotein aggregate implicated in the release of fibroblast growth factor 1 in response to stress.</title>
        <authorList>
            <person name="Landriscina M."/>
            <person name="Bagala C."/>
            <person name="Mandinova A."/>
            <person name="Soldi R."/>
            <person name="Micucci I."/>
            <person name="Bellum S."/>
            <person name="Prudovsky I."/>
            <person name="Maciag T."/>
        </authorList>
    </citation>
    <scope>SUBCELLULAR LOCATION</scope>
    <scope>COPPER-BINDING</scope>
    <scope>INTERACTION WITH S100A13 AND SYT1</scope>
</reference>
<reference key="22">
    <citation type="journal article" date="2002" name="J. Biol. Chem.">
        <title>Identification of ribosome-binding protein p34 as an intracellular protein that binds acidic fibroblast growth factor.</title>
        <authorList>
            <person name="Skjerpen C.S."/>
            <person name="Wesche J."/>
            <person name="Olsnes S."/>
        </authorList>
    </citation>
    <scope>INTERACTION WITH CSNK2A; CSNK2B; FGF2; FIBP AND LRRC59</scope>
    <scope>SUBCELLULAR LOCATION</scope>
    <scope>TISSUE SPECIFICITY</scope>
    <scope>MUTAGENESIS OF SER-114; SER-131 AND LYS-133</scope>
</reference>
<reference key="23">
    <citation type="journal article" date="2006" name="J. Biol. Chem.">
        <title>Receptor specificity of the fibroblast growth factor family. The complete mammalian FGF family.</title>
        <authorList>
            <person name="Zhang X."/>
            <person name="Ibrahimi O.A."/>
            <person name="Olsen S.K."/>
            <person name="Umemori H."/>
            <person name="Mohammadi M."/>
            <person name="Ornitz D.M."/>
        </authorList>
    </citation>
    <scope>INTERACTION WITH FGFR1; FGFR2; FGFR3 AND FGFR4</scope>
    <scope>FUNCTION IN STIMULATION OF CELL PROLIFERATION</scope>
</reference>
<reference key="24">
    <citation type="journal article" date="2008" name="Cancer Lett.">
        <title>The release of fibroblast growth factor-1 from melanoma cells requires copper ions and is mediated by phosphatidylinositol 3-kinase/Akt intracellular signaling pathway.</title>
        <authorList>
            <person name="Di Serio C."/>
            <person name="Doria L."/>
            <person name="Pellerito S."/>
            <person name="Prudovsky I."/>
            <person name="Micucci I."/>
            <person name="Massi D."/>
            <person name="Landriscina M."/>
            <person name="Marchionni N."/>
            <person name="Masotti G."/>
            <person name="Tarantini F."/>
        </authorList>
    </citation>
    <scope>SUBCELLULAR LOCATION</scope>
</reference>
<reference key="25">
    <citation type="journal article" date="2008" name="J. Biol. Chem.">
        <title>Direct binding of integrin alphavbeta3 to FGF1 plays a role in FGF1 signaling.</title>
        <authorList>
            <person name="Mori S."/>
            <person name="Wu C.Y."/>
            <person name="Yamaji S."/>
            <person name="Saegusa J."/>
            <person name="Shi B."/>
            <person name="Ma Z."/>
            <person name="Kuwabara Y."/>
            <person name="Lam K.S."/>
            <person name="Isseroff R.R."/>
            <person name="Takada Y.K."/>
            <person name="Takada Y."/>
        </authorList>
    </citation>
    <scope>FUNCTION</scope>
    <scope>BINDING TO INTEGRIN; HEPARIN AND FGFR1</scope>
    <scope>MUTAGENESIS OF ASN-33; ARG-50; GLU-102; TYR-109; ASN-110; LYS-127; LYS-128; LYS-133 AND ARG-134</scope>
</reference>
<reference key="26">
    <citation type="journal article" date="2010" name="J. Formos. Med. Assoc.">
        <title>Effect of human S100A13 gene silencing on FGF-1 transportation in human endothelial cells.</title>
        <authorList>
            <person name="Cao R."/>
            <person name="Yan B."/>
            <person name="Yang H."/>
            <person name="Zu X."/>
            <person name="Wen G."/>
            <person name="Zhong J."/>
        </authorList>
    </citation>
    <scope>SUBCELLULAR LOCATION</scope>
</reference>
<reference key="27">
    <citation type="journal article" date="2005" name="Cytokine Growth Factor Rev.">
        <title>Cellular signaling by fibroblast growth factor receptors.</title>
        <authorList>
            <person name="Eswarakumar V.P."/>
            <person name="Lax I."/>
            <person name="Schlessinger J."/>
        </authorList>
    </citation>
    <scope>REVIEW</scope>
</reference>
<reference key="28">
    <citation type="journal article" date="2010" name="Nat. Rev. Cancer">
        <title>Fibroblast growth factor signalling: from development to cancer.</title>
        <authorList>
            <person name="Turner N."/>
            <person name="Grose R."/>
        </authorList>
    </citation>
    <scope>REVIEW</scope>
</reference>
<reference key="29">
    <citation type="journal article" date="2010" name="PLoS ONE">
        <title>A novel fibroblast growth factor-1 (FGF1) mutant that acts as an FGF antagonist.</title>
        <authorList>
            <person name="Yamaji S."/>
            <person name="Saegusa J."/>
            <person name="Ieguchi K."/>
            <person name="Fujita M."/>
            <person name="Mori S."/>
            <person name="Takada Y.K."/>
            <person name="Takada Y."/>
        </authorList>
    </citation>
    <scope>FUNCTION</scope>
    <scope>BINDING TO FGFR1</scope>
    <scope>IDENTIFICATION IN A COMPLEX WITH INTEGRIN AND FGFR1</scope>
    <scope>MUTAGENESIS OF ARG-50</scope>
</reference>
<reference key="30">
    <citation type="journal article" date="2012" name="Traffic">
        <title>Nuclear import of exogenous FGF1 requires the ER-protein LRRC59 and the importins Kpnalpha1 and Kpnbeta1.</title>
        <authorList>
            <person name="Zhen Y."/>
            <person name="Sorensen V."/>
            <person name="Skjerpen C.S."/>
            <person name="Haugsten E.M."/>
            <person name="Jin Y."/>
            <person name="Walchli S."/>
            <person name="Olsnes S."/>
            <person name="Wiedlocha A."/>
        </authorList>
    </citation>
    <scope>SUBCELLULAR LOCATION</scope>
    <scope>PHOSPHORYLATION</scope>
    <scope>MUTAGENESIS OF 24-LYS--LYS-27</scope>
</reference>
<reference key="31">
    <citation type="journal article" date="2013" name="PLoS ONE">
        <title>A dominant-negative FGF1 mutant (the R50E mutant) suppresses tumorigenesis and angiogenesis.</title>
        <authorList>
            <person name="Mori S."/>
            <person name="Tran V."/>
            <person name="Nishikawa K."/>
            <person name="Kaneda T."/>
            <person name="Hamada Y."/>
            <person name="Kawaguchi N."/>
            <person name="Fujita M."/>
            <person name="Saegusa J."/>
            <person name="Takada Y.K."/>
            <person name="Matsuura N."/>
            <person name="Zhao M."/>
            <person name="Takada Y."/>
        </authorList>
    </citation>
    <scope>FUNCTION</scope>
    <scope>MUTAGENESIS OF ARG-50</scope>
</reference>
<reference key="32">
    <citation type="journal article" date="2013" name="PLoS ONE">
        <authorList>
            <person name="Mori S."/>
            <person name="Tran V."/>
            <person name="Nishikawa K."/>
            <person name="Kaneda T."/>
            <person name="Hamada Y."/>
            <person name="Kawaguchi N."/>
            <person name="Fujita M."/>
            <person name="Saegusa J."/>
            <person name="Takada Y.K."/>
            <person name="Matsuura N."/>
            <person name="Zhao M."/>
            <person name="Takada Y."/>
        </authorList>
    </citation>
    <scope>ERRATUM OF PUBMED:23469107</scope>
</reference>
<reference key="33">
    <citation type="journal article" date="1991" name="Science">
        <title>Three-dimensional structures of acidic and basic fibroblast growth factors.</title>
        <authorList>
            <person name="Zhu X."/>
            <person name="Komiya H."/>
            <person name="Chirino A."/>
            <person name="Faham S."/>
            <person name="Fox G.M."/>
            <person name="Arakawa T."/>
            <person name="Hsu B.T."/>
            <person name="Rees D.C."/>
        </authorList>
    </citation>
    <scope>X-RAY CRYSTALLOGRAPHY (2.0 ANGSTROMS) OF 16-155</scope>
</reference>
<reference key="34">
    <citation type="journal article" date="1996" name="Biochemistry">
        <title>X-ray crystal structure of human acidic fibroblast growth factor.</title>
        <authorList>
            <person name="Blaber M."/>
            <person name="Disalvo J."/>
            <person name="Thomas K.A."/>
        </authorList>
    </citation>
    <scope>X-RAY CRYSTALLOGRAPHY (2.0 ANGSTROMS) OF 21-155</scope>
</reference>
<reference key="35">
    <citation type="journal article" date="1998" name="Nature">
        <title>Structure of a heparin-linked biologically active dimer of fibroblast growth factor.</title>
        <authorList>
            <person name="DiGabriele A.D."/>
            <person name="Lax I."/>
            <person name="Chen D.I."/>
            <person name="Svahn C.M."/>
            <person name="Jaye M."/>
            <person name="Schlessinger J."/>
            <person name="Hendrickson W.A."/>
        </authorList>
    </citation>
    <scope>X-RAY CRYSTALLOGRAPHY (2.9 ANGSTROMS) OF 21-155 IN COMPLEX WITH HEPARIN</scope>
    <scope>SUBUNIT</scope>
</reference>
<reference key="36">
    <citation type="journal article" date="2000" name="Cell">
        <title>Crystal structures of two FGF-FGFR complexes reveal the determinants of ligand-receptor specificity.</title>
        <authorList>
            <person name="Plotnikov A.N."/>
            <person name="Hubbard S.R."/>
            <person name="Schlessinger J."/>
            <person name="Mohammadi M."/>
        </authorList>
    </citation>
    <scope>X-RAY CRYSTALLOGRAPHY (2.8 ANGSTROMS) OF 22-155 IN COMPLEX WITH FGFR1</scope>
</reference>
<reference key="37">
    <citation type="journal article" date="2000" name="Nature">
        <title>Crystal structure of fibroblast growth factor receptor ectodomain bound to ligand and heparin.</title>
        <authorList>
            <person name="Pellegrini L."/>
            <person name="Burke D.F."/>
            <person name="von Delft F."/>
            <person name="Mulloy B."/>
            <person name="Blundell T.L."/>
        </authorList>
    </citation>
    <scope>X-RAY CRYSTALLOGRAPHY (2.4 ANGSTROMS) OF 16-155 IN COMPLEX WITH FGFR2 AND HEPARIN</scope>
</reference>
<reference key="38">
    <citation type="journal article" date="2000" name="Proc. Natl. Acad. Sci. U.S.A.">
        <title>Structural interactions of fibroblast growth factor receptor with its ligands.</title>
        <authorList>
            <person name="Stauber D.J."/>
            <person name="DiGabriele A.D."/>
            <person name="Hendrickson W.A."/>
        </authorList>
    </citation>
    <scope>X-RAY CRYSTALLOGRAPHY (2.4 ANGSTROMS) OF 21-155 IN COMPLEX WITH FGFR2</scope>
</reference>
<reference key="39">
    <citation type="journal article" date="2002" name="Protein Sci.">
        <title>Alternative type I and I' turn conformations in the beta8/beta9 beta-hairpin of human acidic fibroblast growth factor.</title>
        <authorList>
            <person name="Kim J."/>
            <person name="Blaber S.I."/>
            <person name="Blaber M."/>
        </authorList>
    </citation>
    <scope>X-RAY CRYSTALLOGRAPHY (2.1 ANGSTROMS) OF 16-155</scope>
</reference>
<reference key="40">
    <citation type="journal article" date="2004" name="Proc. Natl. Acad. Sci. U.S.A.">
        <title>Insights into the molecular basis for fibroblast growth factor receptor autoinhibition and ligand-binding promiscuity.</title>
        <authorList>
            <person name="Olsen S.K."/>
            <person name="Ibrahimi O.A."/>
            <person name="Raucci A."/>
            <person name="Zhang F."/>
            <person name="Eliseenkova A.V."/>
            <person name="Yayon A."/>
            <person name="Basilico C."/>
            <person name="Linhardt R.J."/>
            <person name="Schlessinger J."/>
            <person name="Mohammadi M."/>
        </authorList>
    </citation>
    <scope>X-RAY CRYSTALLOGRAPHY (3.2 ANGSTROMS) IN COMPLEX WITH FGFR3</scope>
</reference>
<reference key="41">
    <citation type="journal article" date="1994" name="J. Mol. Biol.">
        <title>1H-NMR assignment and solution structure of human acidic fibroblast growth factor activated by inositol hexasulfate.</title>
        <authorList>
            <person name="Pineda-Lucena A."/>
            <person name="Jimenez M.A."/>
            <person name="Nieto J.L."/>
            <person name="Santoro J."/>
            <person name="Rico M."/>
            <person name="Gimenez-Gallego G."/>
        </authorList>
    </citation>
    <scope>STRUCTURE BY NMR OF 24-155 IN COMPLEX WITH INOSITOL HEXASULFATE</scope>
    <scope>PROTEIN SEQUENCE OF 24-27</scope>
</reference>
<reference key="42">
    <citation type="journal article" date="1996" name="J. Mol. Biol.">
        <title>Three-dimensional structure of acidic fibroblast growth factor in solution: effects of binding to a heparin functional analog.</title>
        <authorList>
            <person name="Pineda-Lucena A."/>
            <person name="Jimenez M.A."/>
            <person name="Lozano R.M."/>
            <person name="Nieto J.L."/>
            <person name="Santoro J."/>
            <person name="Rico M."/>
            <person name="Gimenez-Gallego G."/>
        </authorList>
    </citation>
    <scope>STRUCTURE BY NMR OF 24-155</scope>
</reference>
<reference key="43">
    <citation type="journal article" date="1998" name="J. Mol. Biol.">
        <title>Solution structure of acidic fibroblast growth factor bound to 1,3, 6-naphthalenetrisulfonate: a minimal model for the anti-tumoral action of suramins and suradistas.</title>
        <authorList>
            <person name="Lozano R.M."/>
            <person name="Jimenez M."/>
            <person name="Santoro J."/>
            <person name="Rico M."/>
            <person name="Gimenez-Gallego G."/>
        </authorList>
    </citation>
    <scope>STRUCTURE BY NMR OF 24-155</scope>
</reference>
<reference key="44">
    <citation type="journal article" date="2010" name="J. Biol. Chem.">
        <title>Gentisic acid, a compound associated with plant defense and a metabolite of aspirin, heads a new class of in vivo fibroblast growth factor inhibitors.</title>
        <authorList>
            <person name="Fernandez I.S."/>
            <person name="Cuevas P."/>
            <person name="Angulo J."/>
            <person name="Lopez-Navajas P."/>
            <person name="Canales-Mayordomo A."/>
            <person name="Gonzalez-Corrochano R."/>
            <person name="Lozano R.M."/>
            <person name="Valverde S."/>
            <person name="Jimenez-Barbero J."/>
            <person name="Romero A."/>
            <person name="Gimenez-Gallego G."/>
        </authorList>
    </citation>
    <scope>X-RAY CRYSTALLOGRAPHY (1.98 ANGSTROMS) OF 24-153 IN COMPLEX WITH GENTISIC ACID AND 2,5-DIHYDROXYPHENYLSULFONATE</scope>
    <scope>FUNCTION</scope>
    <scope>HEPARIN-BINDING</scope>
    <scope>INTERACTION WITH FGFR1</scope>
</reference>
<reference key="45">
    <citation type="journal article" date="2010" name="J. Biol. Chem.">
        <title>The heterohexameric complex structure, a component in the non-classical pathway for fibroblast growth factor 1 (FGF1) secretion.</title>
        <authorList>
            <person name="Mohan S.K."/>
            <person name="Rani S.G."/>
            <person name="Yu C."/>
        </authorList>
    </citation>
    <scope>STRUCTURE BY NMR OF 23-155</scope>
</reference>
<proteinExistence type="evidence at protein level"/>
<gene>
    <name type="primary">FGF1</name>
    <name type="synonym">FGFA</name>
</gene>
<organism>
    <name type="scientific">Homo sapiens</name>
    <name type="common">Human</name>
    <dbReference type="NCBI Taxonomy" id="9606"/>
    <lineage>
        <taxon>Eukaryota</taxon>
        <taxon>Metazoa</taxon>
        <taxon>Chordata</taxon>
        <taxon>Craniata</taxon>
        <taxon>Vertebrata</taxon>
        <taxon>Euteleostomi</taxon>
        <taxon>Mammalia</taxon>
        <taxon>Eutheria</taxon>
        <taxon>Euarchontoglires</taxon>
        <taxon>Primates</taxon>
        <taxon>Haplorrhini</taxon>
        <taxon>Catarrhini</taxon>
        <taxon>Hominidae</taxon>
        <taxon>Homo</taxon>
    </lineage>
</organism>
<accession>P05230</accession>
<accession>B2R5T0</accession>
<accession>D3DQF2</accession>
<accession>P07502</accession>
<accession>Q16588</accession>
<feature type="initiator methionine" description="Removed" evidence="2">
    <location>
        <position position="1"/>
    </location>
</feature>
<feature type="propeptide" id="PRO_0000008907">
    <location>
        <begin position="2"/>
        <end position="15"/>
    </location>
</feature>
<feature type="chain" id="PRO_0000008908" description="Fibroblast growth factor 1">
    <location>
        <begin position="16"/>
        <end position="155"/>
    </location>
</feature>
<feature type="region of interest" description="Heparin-binding">
    <location>
        <begin position="127"/>
        <end position="143"/>
    </location>
</feature>
<feature type="short sequence motif" description="Nuclear localization signal">
    <location>
        <begin position="24"/>
        <end position="27"/>
    </location>
</feature>
<feature type="binding site" evidence="5 19">
    <location>
        <position position="33"/>
    </location>
    <ligand>
        <name>heparin</name>
        <dbReference type="ChEBI" id="CHEBI:28304"/>
    </ligand>
</feature>
<feature type="modified residue" description="N-acetylalanine" evidence="2">
    <location>
        <position position="2"/>
    </location>
</feature>
<feature type="splice variant" id="VSP_036536" description="In isoform 2." evidence="21">
    <original>IQLQ</original>
    <variation>TDTK</variation>
    <location>
        <begin position="57"/>
        <end position="60"/>
    </location>
</feature>
<feature type="splice variant" id="VSP_036537" description="In isoform 2." evidence="21">
    <location>
        <begin position="61"/>
        <end position="155"/>
    </location>
</feature>
<feature type="sequence variant" id="VAR_021357" description="In dbSNP:rs17223632." evidence="20">
    <original>G</original>
    <variation>E</variation>
    <location>
        <position position="21"/>
    </location>
</feature>
<feature type="mutagenesis site" description="Loss of nuclear import leading to loss of phosphorylation by PKC/PRKCD." evidence="14">
    <original>KKPK</original>
    <variation>AAPA</variation>
    <location>
        <begin position="24"/>
        <end position="27"/>
    </location>
</feature>
<feature type="mutagenesis site" description="No effect on integrin-binding." evidence="10">
    <original>N</original>
    <variation>A</variation>
    <location>
        <position position="33"/>
    </location>
</feature>
<feature type="mutagenesis site" description="Dominant-negative mutant. Defective in integrin-binding and in ternary complex formation with integrin and FGFR1. No effect on heparin- and FGFR1-binding. Defective in inducing FGF1 signaling, cell proliferation and cell migration. Defective in inducing angiogenesis, and suppression of angiogenesis in different in vitro and in vivo angiogenesis models." evidence="10 13 15">
    <original>R</original>
    <variation>E</variation>
    <location>
        <position position="50"/>
    </location>
</feature>
<feature type="mutagenesis site" description="No effect on integrin-binding. No effect on integrin- and heparin-binding, loss of FGFR1-binding, defective in inducing FGF1 signaling, cell proliferation and cell migration; when associated with A-109 and A-110." evidence="10">
    <original>E</original>
    <variation>A</variation>
    <location>
        <position position="102"/>
    </location>
</feature>
<feature type="mutagenesis site" description="No effect on integrin- and heparin-binding, loss of FGFR1-binding, defective in inducing FGF1 signaling, cell proliferation and cell migration; when associated with A-102 and A-110." evidence="10">
    <original>Y</original>
    <variation>A</variation>
    <location>
        <position position="109"/>
    </location>
</feature>
<feature type="mutagenesis site" description="No effect on integrin-binding. No effect on integrin- and heparin-binding, loss of FGFR1-binding, defective in inducing FGF1 signaling, cell proliferation and cell migration; when associated with A-102 and A-109." evidence="10">
    <original>N</original>
    <variation>A</variation>
    <location>
        <position position="110"/>
    </location>
</feature>
<feature type="mutagenesis site" description="Decrease in LRRC59-binding." evidence="7">
    <original>S</original>
    <variation>A</variation>
    <location>
        <position position="114"/>
    </location>
</feature>
<feature type="mutagenesis site" description="Reduced integrin-binding; when associated with E-128. Defective in integrin-, heparin- and FGFR1-binding, and defective in inducing FGF1 signaling, cell proliferation and cell migration; when associated with E-128; E-133 and E-134." evidence="10">
    <original>K</original>
    <variation>E</variation>
    <location>
        <position position="127"/>
    </location>
</feature>
<feature type="mutagenesis site" description="Reduced integrin-binding; when associated with E-127. Defective in integrin-, heparin- and FGFR1-binding, and defective in inducing FGF1 signaling, cell proliferation and cell migration; when associated with E-127; E-133 and E-134." evidence="10">
    <original>K</original>
    <variation>E</variation>
    <location>
        <position position="128"/>
    </location>
</feature>
<feature type="mutagenesis site" description="Decrease in LRRC59-binding." evidence="7">
    <original>S</original>
    <variation>A</variation>
    <location>
        <position position="131"/>
    </location>
</feature>
<feature type="mutagenesis site" description="Decrease in LRRC59-binding." evidence="7">
    <original>S</original>
    <variation>E</variation>
    <location>
        <position position="131"/>
    </location>
</feature>
<feature type="mutagenesis site" description="Loss of LRRC59-binding." evidence="7">
    <original>K</original>
    <variation>A</variation>
    <location>
        <position position="133"/>
    </location>
</feature>
<feature type="mutagenesis site" description="Loss of CSNK2A-, CSNK2B- and LRRC59-binding. Reduced integrin-binding; when associated with E-134. Defective in integrin-, heparin- and FGFR1-binding, and defective in inducing FGF1 signaling, cell proliferation and cell migration; when associated with E-128; E-133 and E-134." evidence="7 10">
    <original>K</original>
    <variation>E</variation>
    <location>
        <position position="133"/>
    </location>
</feature>
<feature type="mutagenesis site" description="No effect on LRRC59-binding." evidence="7">
    <original>K</original>
    <variation>R</variation>
    <location>
        <position position="133"/>
    </location>
</feature>
<feature type="mutagenesis site" description="Reduced integrin-binding; when associated with E-133. Defective in integrin-, heparin- and FGFR1-binding, and defective in inducing FGF1 signaling, cell proliferation and cell migration; when associated with E-127; E-128 and E-133." evidence="10">
    <original>R</original>
    <variation>E</variation>
    <location>
        <position position="134"/>
    </location>
</feature>
<feature type="turn" evidence="29">
    <location>
        <begin position="11"/>
        <end position="13"/>
    </location>
</feature>
<feature type="strand" evidence="24">
    <location>
        <begin position="23"/>
        <end position="25"/>
    </location>
</feature>
<feature type="strand" evidence="24">
    <location>
        <begin position="27"/>
        <end position="31"/>
    </location>
</feature>
<feature type="turn" evidence="24">
    <location>
        <begin position="32"/>
        <end position="35"/>
    </location>
</feature>
<feature type="strand" evidence="24">
    <location>
        <begin position="36"/>
        <end position="40"/>
    </location>
</feature>
<feature type="turn" evidence="23">
    <location>
        <begin position="42"/>
        <end position="44"/>
    </location>
</feature>
<feature type="strand" evidence="24">
    <location>
        <begin position="46"/>
        <end position="49"/>
    </location>
</feature>
<feature type="helix" evidence="26">
    <location>
        <begin position="55"/>
        <end position="57"/>
    </location>
</feature>
<feature type="strand" evidence="24">
    <location>
        <begin position="59"/>
        <end position="65"/>
    </location>
</feature>
<feature type="strand" evidence="24">
    <location>
        <begin position="68"/>
        <end position="73"/>
    </location>
</feature>
<feature type="turn" evidence="24">
    <location>
        <begin position="74"/>
        <end position="76"/>
    </location>
</feature>
<feature type="strand" evidence="24">
    <location>
        <begin position="79"/>
        <end position="82"/>
    </location>
</feature>
<feature type="strand" evidence="28">
    <location>
        <begin position="84"/>
        <end position="86"/>
    </location>
</feature>
<feature type="strand" evidence="24">
    <location>
        <begin position="88"/>
        <end position="93"/>
    </location>
</feature>
<feature type="helix" evidence="24">
    <location>
        <begin position="96"/>
        <end position="98"/>
    </location>
</feature>
<feature type="strand" evidence="24">
    <location>
        <begin position="100"/>
        <end position="105"/>
    </location>
</feature>
<feature type="turn" evidence="24">
    <location>
        <begin position="106"/>
        <end position="108"/>
    </location>
</feature>
<feature type="strand" evidence="24">
    <location>
        <begin position="109"/>
        <end position="115"/>
    </location>
</feature>
<feature type="helix" evidence="24">
    <location>
        <begin position="118"/>
        <end position="120"/>
    </location>
</feature>
<feature type="strand" evidence="27">
    <location>
        <begin position="123"/>
        <end position="126"/>
    </location>
</feature>
<feature type="strand" evidence="30">
    <location>
        <begin position="130"/>
        <end position="132"/>
    </location>
</feature>
<feature type="helix" evidence="24">
    <location>
        <begin position="135"/>
        <end position="137"/>
    </location>
</feature>
<feature type="turn" evidence="25">
    <location>
        <begin position="138"/>
        <end position="141"/>
    </location>
</feature>
<feature type="helix" evidence="26">
    <location>
        <begin position="143"/>
        <end position="145"/>
    </location>
</feature>
<feature type="strand" evidence="24">
    <location>
        <begin position="147"/>
        <end position="151"/>
    </location>
</feature>